<proteinExistence type="evidence at protein level"/>
<accession>P19793</accession>
<accession>B3KY83</accession>
<accession>Q2NL52</accession>
<accession>Q2V504</accession>
<comment type="function">
    <text evidence="6 10 12 15 17 18 22 23 26 27 28 31 34 35 36 38 39 41 42">Receptor for retinoic acid that acts as a transcription factor (PubMed:10874028, PubMed:11162439, PubMed:11915042, PubMed:37478846). Forms homo- or heterodimers with retinoic acid receptors (RARs) and binds to target response elements in response to their ligands, all-trans or 9-cis retinoic acid, to regulate gene expression in various biological processes (PubMed:10195690, PubMed:11162439, PubMed:11915042, PubMed:16107141, PubMed:17761950, PubMed:18800767, PubMed:19167885, PubMed:28167758, PubMed:37478846). The RAR/RXR heterodimers bind to the retinoic acid response elements (RARE) composed of tandem 5'-AGGTCA-3' sites known as DR1-DR5 to regulate transcription (PubMed:10195690, PubMed:11162439, PubMed:11915042, PubMed:17761950, PubMed:28167758). The high affinity ligand for retinoid X receptors (RXRs) is 9-cis retinoic acid (PubMed:1310260). In the absence of ligand, the RXR-RAR heterodimers associate with a multiprotein complex containing transcription corepressors that induce histone deacetylation, chromatin condensation and transcriptional suppression (PubMed:20215566). On ligand binding, the corepressors dissociate from the receptors and coactivators are recruited leading to transcriptional activation (PubMed:20215566, PubMed:37478846, PubMed:9267036). Serves as a common heterodimeric partner for a number of nuclear receptors, such as RARA, RARB and PPARA (PubMed:10195690, PubMed:11915042, PubMed:28167758, PubMed:29021580). The RXRA/RARB heterodimer can act as a transcriptional repressor or transcriptional activator, depending on the RARE DNA element context (PubMed:29021580). The RXRA/PPARA heterodimer is required for PPARA transcriptional activity on fatty acid oxidation genes such as ACOX1 and the P450 system genes (PubMed:10195690). Together with RARA, positively regulates microRNA-10a expression, thereby inhibiting the GATA6/VCAM1 signaling response to pulsatile shear stress in vascular endothelial cells (PubMed:28167758). Acts as an enhancer of RARA binding to RARE DNA element (PubMed:28167758). May facilitate the nuclear import of heterodimerization partners such as VDR and NR4A1 (PubMed:12145331, PubMed:15509776). Promotes myelin debris phagocytosis and remyelination by macrophages (PubMed:26463675). Plays a role in the attenuation of the innate immune system in response to viral infections, possibly by negatively regulating the transcription of antiviral genes such as type I IFN genes (PubMed:25417649). Involved in the regulation of calcium signaling by repressing ITPR2 gene expression, thereby controlling cellular senescence (PubMed:30216632).</text>
</comment>
<comment type="subunit">
    <text evidence="2 6 7 8 9 10 11 13 14 15 16 20 21 22 24 25 26 29 30 36 37 38 40 42">Homodimer (PubMed:10669605, PubMed:17761950). Heterodimer (via C-terminus) with RARA; required for ligand-dependent retinoic acid receptor transcriptional activity; association with RARA is enhanced by pulsatile shear stress (PubMed:10698945, PubMed:15509776, PubMed:28167758). Heterodimer with PPARA (via the leucine-like zipper in the LBD); the interaction is required for PPARA transcriptional activity (PubMed:10195690, PubMed:11698662, PubMed:11915042). Heterodimerizes with PPARG (PubMed:10882139, PubMed:11698662). Heterodimerizes (via NR LBD) with RARB (PubMed:29021580). Heterodimerizes with NR1H4; the heterodimerization enhances the binding affinity for LXXLL motifs from coactivators (PubMed:30275017). Interacts with NCOA3 and NCOA6 coactivators (PubMed:10567404, PubMed:9267036). Interacts with coactivator FAM120B (By similarity). Interacts with coactivator PELP1, SENP6, SFPQ, DNTTIP2 and RNF8 (PubMed:11259580, PubMed:14981089, PubMed:15047147, PubMed:16574651, PubMed:16912044). Interacts with PRMT2 (PubMed:12039952). Interacts with ASXL1 (By similarity). Interacts with BHLHE40/DEC1, BHLHE41/DEC2, NCOR1 and NCOR2 (PubMed:19786558). Interacts in a ligand-dependent fashion with MED1 and NCOA1 (PubMed:10882139, PubMed:11698662, PubMed:19786558). Interacts with VDR (PubMed:28698609). Interacts with EP300; the interaction is decreased by 9-cis retinoic acid (PubMed:17761950). Heterodimer (via C-terminus) with NR4A1 (via DNA-binding domain); DNA-binding of the heterodimer is enhanced by 9-cis retinoic acid (PubMed:15509776, PubMed:17761950). NR4A1 competes with EP300 for interaction with RXRA and thereby attenuates EP300 mediated acetylation of RXRA (PubMed:17761950). In the absence of hormonal ligand, interacts with TACC1 (PubMed:20078863). Interacts ith IGFBP3 (PubMed:10874028).</text>
</comment>
<comment type="subunit">
    <text evidence="15">(Microbial infection) Interacts (via the DNA binding domain) with HCV core protein; the interaction enhances the transcriptional activities of the RXRA/RARA and the RXRA/PPARA heterodimers.</text>
</comment>
<comment type="interaction">
    <interactant intactId="EBI-78598">
        <id>P19793</id>
    </interactant>
    <interactant intactId="EBI-711810">
        <id>O14503</id>
        <label>BHLHE40</label>
    </interactant>
    <organismsDiffer>false</organismsDiffer>
    <experiments>4</experiments>
</comment>
<comment type="interaction">
    <interactant intactId="EBI-78598">
        <id>P19793</id>
    </interactant>
    <interactant intactId="EBI-400434">
        <id>P35637</id>
        <label>FUS</label>
    </interactant>
    <organismsDiffer>false</organismsDiffer>
    <experiments>3</experiments>
</comment>
<comment type="interaction">
    <interactant intactId="EBI-78598">
        <id>P19793</id>
    </interactant>
    <interactant intactId="EBI-394459">
        <id>Q15648</id>
        <label>MED1</label>
    </interactant>
    <organismsDiffer>false</organismsDiffer>
    <experiments>6</experiments>
</comment>
<comment type="interaction">
    <interactant intactId="EBI-78598">
        <id>P19793</id>
    </interactant>
    <interactant intactId="EBI-394558">
        <id>Q71SY5</id>
        <label>MED25</label>
    </interactant>
    <organismsDiffer>false</organismsDiffer>
    <experiments>4</experiments>
</comment>
<comment type="interaction">
    <interactant intactId="EBI-78598">
        <id>P19793</id>
    </interactant>
    <interactant intactId="EBI-455189">
        <id>Q15788</id>
        <label>NCOA1</label>
    </interactant>
    <organismsDiffer>false</organismsDiffer>
    <experiments>14</experiments>
</comment>
<comment type="interaction">
    <interactant intactId="EBI-78598">
        <id>P19793</id>
    </interactant>
    <interactant intactId="EBI-81236">
        <id>Q15596</id>
        <label>NCOA2</label>
    </interactant>
    <organismsDiffer>false</organismsDiffer>
    <experiments>5</experiments>
</comment>
<comment type="interaction">
    <interactant intactId="EBI-78598">
        <id>P19793</id>
    </interactant>
    <interactant intactId="EBI-745354">
        <id>P55055</id>
        <label>NR1H2</label>
    </interactant>
    <organismsDiffer>false</organismsDiffer>
    <experiments>3</experiments>
</comment>
<comment type="interaction">
    <interactant intactId="EBI-78598">
        <id>P19793</id>
    </interactant>
    <interactant intactId="EBI-21458417">
        <id>P55055-1</id>
        <label>NR1H2</label>
    </interactant>
    <organismsDiffer>false</organismsDiffer>
    <experiments>2</experiments>
</comment>
<comment type="interaction">
    <interactant intactId="EBI-78598">
        <id>P19793</id>
    </interactant>
    <interactant intactId="EBI-781356">
        <id>Q13133</id>
        <label>NR1H3</label>
    </interactant>
    <organismsDiffer>false</organismsDiffer>
    <experiments>8</experiments>
</comment>
<comment type="interaction">
    <interactant intactId="EBI-78598">
        <id>P19793</id>
    </interactant>
    <interactant intactId="EBI-79464">
        <id>P27986</id>
        <label>PIK3R1</label>
    </interactant>
    <organismsDiffer>false</organismsDiffer>
    <experiments>8</experiments>
</comment>
<comment type="interaction">
    <interactant intactId="EBI-78598">
        <id>P19793</id>
    </interactant>
    <interactant intactId="EBI-781384">
        <id>P37231</id>
        <label>PPARG</label>
    </interactant>
    <organismsDiffer>false</organismsDiffer>
    <experiments>3</experiments>
</comment>
<comment type="interaction">
    <interactant intactId="EBI-78598">
        <id>P19793</id>
    </interactant>
    <interactant intactId="EBI-15664691">
        <id>P37231-1</id>
        <label>PPARG</label>
    </interactant>
    <organismsDiffer>false</organismsDiffer>
    <experiments>6</experiments>
</comment>
<comment type="interaction">
    <interactant intactId="EBI-78598">
        <id>P19793</id>
    </interactant>
    <interactant intactId="EBI-413374">
        <id>P10276</id>
        <label>RARA</label>
    </interactant>
    <organismsDiffer>false</organismsDiffer>
    <experiments>14</experiments>
</comment>
<comment type="interaction">
    <interactant intactId="EBI-78598">
        <id>P19793</id>
    </interactant>
    <interactant intactId="EBI-1057697">
        <id>P42224</id>
        <label>STAT1</label>
    </interactant>
    <organismsDiffer>false</organismsDiffer>
    <experiments>2</experiments>
</comment>
<comment type="interaction">
    <interactant intactId="EBI-78598">
        <id>P19793</id>
    </interactant>
    <interactant intactId="EBI-286357">
        <id>P11473</id>
        <label>VDR</label>
    </interactant>
    <organismsDiffer>false</organismsDiffer>
    <experiments>6</experiments>
</comment>
<comment type="interaction">
    <interactant intactId="EBI-78598">
        <id>P19793</id>
    </interactant>
    <interactant intactId="EBI-15903843">
        <id>P97792-1</id>
        <label>Cxadr</label>
    </interactant>
    <organismsDiffer>true</organismsDiffer>
    <experiments>2</experiments>
</comment>
<comment type="interaction">
    <interactant intactId="EBI-78598">
        <id>P19793</id>
    </interactant>
    <interactant intactId="EBI-286271">
        <id>Q9JLI4</id>
        <label>Ncoa6</label>
    </interactant>
    <organismsDiffer>true</organismsDiffer>
    <experiments>2</experiments>
</comment>
<comment type="interaction">
    <interactant intactId="EBI-78598">
        <id>P19793</id>
    </interactant>
    <interactant intactId="EBI-286261">
        <id>P04625</id>
        <label>THRA</label>
    </interactant>
    <organismsDiffer>true</organismsDiffer>
    <experiments>4</experiments>
</comment>
<comment type="interaction">
    <interactant intactId="EBI-78598">
        <id>P19793</id>
    </interactant>
    <interactant intactId="EBI-9159704">
        <id>PRO_0000278730</id>
        <dbReference type="UniProtKB" id="Q03463"/>
    </interactant>
    <organismsDiffer>true</organismsDiffer>
    <experiments>3</experiments>
</comment>
<comment type="subcellular location">
    <subcellularLocation>
        <location evidence="3 10 15 17 22 26 36">Nucleus</location>
    </subcellularLocation>
    <subcellularLocation>
        <location evidence="17 22">Cytoplasm</location>
    </subcellularLocation>
    <subcellularLocation>
        <location evidence="26">Mitochondrion</location>
    </subcellularLocation>
    <text evidence="17 22 26 36">Localization to the nucleus is enhanced by vitamin D3 (PubMed:15509776). Nuclear localization may be enhanced by the interaction with heterodimerization partner VDR (PubMed:12145331). Translocation to the mitochondrion upon interaction with NR4A1 (PubMed:15509776, PubMed:17761950). Increased nuclear localization upon pulsatile shear stress (PubMed:28167758).</text>
</comment>
<comment type="alternative products">
    <event type="alternative splicing"/>
    <isoform>
        <id>P19793-1</id>
        <name>1</name>
        <sequence type="displayed"/>
    </isoform>
    <isoform>
        <id>P19793-2</id>
        <name>2</name>
        <sequence type="described" ref="VSP_056565"/>
    </isoform>
</comment>
<comment type="tissue specificity">
    <text evidence="19 32 33 35 39">Expressed in lung fibroblasts (at protein level) (PubMed:30216632). Expressed in monocytes (PubMed:26463675). Highly expressed in liver, also found in kidney and brain (PubMed:14702039, PubMed:2159111, PubMed:24275569).</text>
</comment>
<comment type="induction">
    <text evidence="35 36">Down-regulated by aging (PubMed:26463675). Induced by pulsatile shear stress (PubMed:28167758).</text>
</comment>
<comment type="domain">
    <text>Composed of three domains: a modulating N-terminal domain (AF1 domain), a DNA-binding domain and a C-terminal ligand-binding domain (AF2 domain).</text>
</comment>
<comment type="PTM">
    <text evidence="26">Acetylated by EP300; acetylation enhances DNA binding and transcriptional activity.</text>
</comment>
<comment type="PTM">
    <text evidence="2 12">Phosphorylated on serine and threonine residues mainly in the N-terminal modulating domain (By similarity). Constitutively phosphorylated on Ser-21 in the presence or absence of ligand (By similarity). Under stress conditions, hyperphosphorylated by activated JNK on Ser-56, Ser-70, Thr-82 and Ser-260 (By similarity). Phosphorylated on Ser-27, in vitro, by PKA (PubMed:11162439). This phosphorylation is required for repression of cAMP-mediated transcriptional activity of RARA (PubMed:11162439).</text>
</comment>
<comment type="PTM">
    <text evidence="41">Ubiquitinated by UBR5, leading to its degradation: UBR5 specifically recognizes and binds ligand-bound RXRA when it is not associated with coactivators (NCOAs) (PubMed:37478846). In presence of NCOAs, the UBR5-degron is not accessible, preventing its ubiquitination and degradation (PubMed:37478846).</text>
</comment>
<comment type="PTM">
    <text evidence="25">Sumoylation negatively regulates transcriptional activity. Desumoylated specifically by SENP6.</text>
</comment>
<comment type="similarity">
    <text evidence="44">Belongs to the nuclear hormone receptor family. NR2 subfamily.</text>
</comment>
<comment type="online information" name="Wikipedia">
    <link uri="https://en.wikipedia.org/wiki/Retinoid_X_receptor"/>
    <text>Retinoid X receptor entry</text>
</comment>
<organism>
    <name type="scientific">Homo sapiens</name>
    <name type="common">Human</name>
    <dbReference type="NCBI Taxonomy" id="9606"/>
    <lineage>
        <taxon>Eukaryota</taxon>
        <taxon>Metazoa</taxon>
        <taxon>Chordata</taxon>
        <taxon>Craniata</taxon>
        <taxon>Vertebrata</taxon>
        <taxon>Euteleostomi</taxon>
        <taxon>Mammalia</taxon>
        <taxon>Eutheria</taxon>
        <taxon>Euarchontoglires</taxon>
        <taxon>Primates</taxon>
        <taxon>Haplorrhini</taxon>
        <taxon>Catarrhini</taxon>
        <taxon>Hominidae</taxon>
        <taxon>Homo</taxon>
    </lineage>
</organism>
<gene>
    <name type="primary">RXRA</name>
    <name type="synonym">NR2B1</name>
</gene>
<keyword id="KW-0002">3D-structure</keyword>
<keyword id="KW-0007">Acetylation</keyword>
<keyword id="KW-0025">Alternative splicing</keyword>
<keyword id="KW-0963">Cytoplasm</keyword>
<keyword id="KW-0238">DNA-binding</keyword>
<keyword id="KW-0945">Host-virus interaction</keyword>
<keyword id="KW-1017">Isopeptide bond</keyword>
<keyword id="KW-0479">Metal-binding</keyword>
<keyword id="KW-0496">Mitochondrion</keyword>
<keyword id="KW-0539">Nucleus</keyword>
<keyword id="KW-0597">Phosphoprotein</keyword>
<keyword id="KW-1267">Proteomics identification</keyword>
<keyword id="KW-0675">Receptor</keyword>
<keyword id="KW-1185">Reference proteome</keyword>
<keyword id="KW-0804">Transcription</keyword>
<keyword id="KW-0805">Transcription regulation</keyword>
<keyword id="KW-0832">Ubl conjugation</keyword>
<keyword id="KW-0862">Zinc</keyword>
<keyword id="KW-0863">Zinc-finger</keyword>
<name>RXRA_HUMAN</name>
<evidence type="ECO:0000250" key="1"/>
<evidence type="ECO:0000250" key="2">
    <source>
        <dbReference type="UniProtKB" id="P28700"/>
    </source>
</evidence>
<evidence type="ECO:0000255" key="3">
    <source>
        <dbReference type="PROSITE-ProRule" id="PRU00407"/>
    </source>
</evidence>
<evidence type="ECO:0000255" key="4">
    <source>
        <dbReference type="PROSITE-ProRule" id="PRU01189"/>
    </source>
</evidence>
<evidence type="ECO:0000256" key="5">
    <source>
        <dbReference type="SAM" id="MobiDB-lite"/>
    </source>
</evidence>
<evidence type="ECO:0000269" key="6">
    <source>
    </source>
</evidence>
<evidence type="ECO:0000269" key="7">
    <source>
    </source>
</evidence>
<evidence type="ECO:0000269" key="8">
    <source>
    </source>
</evidence>
<evidence type="ECO:0000269" key="9">
    <source>
    </source>
</evidence>
<evidence type="ECO:0000269" key="10">
    <source>
    </source>
</evidence>
<evidence type="ECO:0000269" key="11">
    <source>
    </source>
</evidence>
<evidence type="ECO:0000269" key="12">
    <source>
    </source>
</evidence>
<evidence type="ECO:0000269" key="13">
    <source>
    </source>
</evidence>
<evidence type="ECO:0000269" key="14">
    <source>
    </source>
</evidence>
<evidence type="ECO:0000269" key="15">
    <source>
    </source>
</evidence>
<evidence type="ECO:0000269" key="16">
    <source>
    </source>
</evidence>
<evidence type="ECO:0000269" key="17">
    <source>
    </source>
</evidence>
<evidence type="ECO:0000269" key="18">
    <source>
    </source>
</evidence>
<evidence type="ECO:0000269" key="19">
    <source>
    </source>
</evidence>
<evidence type="ECO:0000269" key="20">
    <source>
    </source>
</evidence>
<evidence type="ECO:0000269" key="21">
    <source>
    </source>
</evidence>
<evidence type="ECO:0000269" key="22">
    <source>
    </source>
</evidence>
<evidence type="ECO:0000269" key="23">
    <source>
    </source>
</evidence>
<evidence type="ECO:0000269" key="24">
    <source>
    </source>
</evidence>
<evidence type="ECO:0000269" key="25">
    <source>
    </source>
</evidence>
<evidence type="ECO:0000269" key="26">
    <source>
    </source>
</evidence>
<evidence type="ECO:0000269" key="27">
    <source>
    </source>
</evidence>
<evidence type="ECO:0000269" key="28">
    <source>
    </source>
</evidence>
<evidence type="ECO:0000269" key="29">
    <source>
    </source>
</evidence>
<evidence type="ECO:0000269" key="30">
    <source>
    </source>
</evidence>
<evidence type="ECO:0000269" key="31">
    <source>
    </source>
</evidence>
<evidence type="ECO:0000269" key="32">
    <source>
    </source>
</evidence>
<evidence type="ECO:0000269" key="33">
    <source>
    </source>
</evidence>
<evidence type="ECO:0000269" key="34">
    <source>
    </source>
</evidence>
<evidence type="ECO:0000269" key="35">
    <source>
    </source>
</evidence>
<evidence type="ECO:0000269" key="36">
    <source>
    </source>
</evidence>
<evidence type="ECO:0000269" key="37">
    <source>
    </source>
</evidence>
<evidence type="ECO:0000269" key="38">
    <source>
    </source>
</evidence>
<evidence type="ECO:0000269" key="39">
    <source>
    </source>
</evidence>
<evidence type="ECO:0000269" key="40">
    <source>
    </source>
</evidence>
<evidence type="ECO:0000269" key="41">
    <source>
    </source>
</evidence>
<evidence type="ECO:0000269" key="42">
    <source>
    </source>
</evidence>
<evidence type="ECO:0000303" key="43">
    <source>
    </source>
</evidence>
<evidence type="ECO:0000305" key="44"/>
<evidence type="ECO:0007744" key="45">
    <source>
        <dbReference type="PDB" id="1BY4"/>
    </source>
</evidence>
<evidence type="ECO:0007744" key="46">
    <source>
        <dbReference type="PDB" id="1K74"/>
    </source>
</evidence>
<evidence type="ECO:0007744" key="47">
    <source>
        <dbReference type="PDB" id="2ACL"/>
    </source>
</evidence>
<evidence type="ECO:0007744" key="48">
    <source>
        <dbReference type="PDB" id="3FAL"/>
    </source>
</evidence>
<evidence type="ECO:0007744" key="49">
    <source>
        <dbReference type="PDB" id="3FC6"/>
    </source>
</evidence>
<evidence type="ECO:0007744" key="50">
    <source>
        <dbReference type="PDB" id="5UAN"/>
    </source>
</evidence>
<evidence type="ECO:0007744" key="51">
    <source>
        <dbReference type="PDB" id="6A5Y"/>
    </source>
</evidence>
<evidence type="ECO:0007744" key="52">
    <source>
    </source>
</evidence>
<evidence type="ECO:0007744" key="53">
    <source>
    </source>
</evidence>
<evidence type="ECO:0007744" key="54">
    <source>
    </source>
</evidence>
<evidence type="ECO:0007829" key="55">
    <source>
        <dbReference type="PDB" id="1FM9"/>
    </source>
</evidence>
<evidence type="ECO:0007829" key="56">
    <source>
        <dbReference type="PDB" id="1MZN"/>
    </source>
</evidence>
<evidence type="ECO:0007829" key="57">
    <source>
        <dbReference type="PDB" id="1XVP"/>
    </source>
</evidence>
<evidence type="ECO:0007829" key="58">
    <source>
        <dbReference type="PDB" id="2NLL"/>
    </source>
</evidence>
<evidence type="ECO:0007829" key="59">
    <source>
        <dbReference type="PDB" id="3DZU"/>
    </source>
</evidence>
<evidence type="ECO:0007829" key="60">
    <source>
        <dbReference type="PDB" id="3NSQ"/>
    </source>
</evidence>
<evidence type="ECO:0007829" key="61">
    <source>
        <dbReference type="PDB" id="3UVV"/>
    </source>
</evidence>
<evidence type="ECO:0007829" key="62">
    <source>
        <dbReference type="PDB" id="4CN5"/>
    </source>
</evidence>
<evidence type="ECO:0007829" key="63">
    <source>
        <dbReference type="PDB" id="4ZO1"/>
    </source>
</evidence>
<evidence type="ECO:0007829" key="64">
    <source>
        <dbReference type="PDB" id="6FBQ"/>
    </source>
</evidence>
<evidence type="ECO:0007829" key="65">
    <source>
        <dbReference type="PDB" id="6LB4"/>
    </source>
</evidence>
<evidence type="ECO:0007829" key="66">
    <source>
        <dbReference type="PDB" id="7A77"/>
    </source>
</evidence>
<feature type="chain" id="PRO_0000053566" description="Retinoic acid receptor RXR-alpha">
    <location>
        <begin position="1"/>
        <end position="462"/>
    </location>
</feature>
<feature type="domain" description="NR LBD" evidence="4">
    <location>
        <begin position="227"/>
        <end position="458"/>
    </location>
</feature>
<feature type="DNA-binding region" description="Nuclear receptor" evidence="3">
    <location>
        <begin position="135"/>
        <end position="200"/>
    </location>
</feature>
<feature type="zinc finger region" description="NR C4-type" evidence="3">
    <location>
        <begin position="135"/>
        <end position="155"/>
    </location>
</feature>
<feature type="zinc finger region" description="NR C4-type" evidence="3">
    <location>
        <begin position="171"/>
        <end position="195"/>
    </location>
</feature>
<feature type="region of interest" description="Modulating" evidence="1">
    <location>
        <begin position="1"/>
        <end position="134"/>
    </location>
</feature>
<feature type="region of interest" description="Disordered" evidence="5">
    <location>
        <begin position="1"/>
        <end position="107"/>
    </location>
</feature>
<feature type="region of interest" description="Nuclear localization signal" evidence="17">
    <location>
        <begin position="160"/>
        <end position="165"/>
    </location>
</feature>
<feature type="region of interest" description="Hinge">
    <location>
        <begin position="201"/>
        <end position="224"/>
    </location>
</feature>
<feature type="region of interest" description="Disordered" evidence="5">
    <location>
        <begin position="206"/>
        <end position="228"/>
    </location>
</feature>
<feature type="region of interest" description="Required for nuclear export" evidence="22">
    <location>
        <begin position="348"/>
        <end position="368"/>
    </location>
</feature>
<feature type="compositionally biased region" description="Polar residues" evidence="5">
    <location>
        <begin position="11"/>
        <end position="24"/>
    </location>
</feature>
<feature type="compositionally biased region" description="Polar residues" evidence="5">
    <location>
        <begin position="49"/>
        <end position="58"/>
    </location>
</feature>
<feature type="compositionally biased region" description="Polar residues" evidence="5">
    <location>
        <begin position="78"/>
        <end position="104"/>
    </location>
</feature>
<feature type="compositionally biased region" description="Basic and acidic residues" evidence="5">
    <location>
        <begin position="206"/>
        <end position="218"/>
    </location>
</feature>
<feature type="binding site" evidence="8 45">
    <location>
        <position position="135"/>
    </location>
    <ligand>
        <name>Zn(2+)</name>
        <dbReference type="ChEBI" id="CHEBI:29105"/>
        <label>1</label>
    </ligand>
</feature>
<feature type="binding site" evidence="8 45">
    <location>
        <position position="138"/>
    </location>
    <ligand>
        <name>Zn(2+)</name>
        <dbReference type="ChEBI" id="CHEBI:29105"/>
        <label>1</label>
    </ligand>
</feature>
<feature type="binding site" evidence="8 45">
    <location>
        <position position="152"/>
    </location>
    <ligand>
        <name>Zn(2+)</name>
        <dbReference type="ChEBI" id="CHEBI:29105"/>
        <label>1</label>
    </ligand>
</feature>
<feature type="binding site" evidence="8 45">
    <location>
        <position position="155"/>
    </location>
    <ligand>
        <name>Zn(2+)</name>
        <dbReference type="ChEBI" id="CHEBI:29105"/>
        <label>1</label>
    </ligand>
</feature>
<feature type="binding site" evidence="8 45">
    <location>
        <position position="171"/>
    </location>
    <ligand>
        <name>Zn(2+)</name>
        <dbReference type="ChEBI" id="CHEBI:29105"/>
        <label>2</label>
    </ligand>
</feature>
<feature type="binding site" evidence="8 45">
    <location>
        <position position="177"/>
    </location>
    <ligand>
        <name>Zn(2+)</name>
        <dbReference type="ChEBI" id="CHEBI:29105"/>
        <label>2</label>
    </ligand>
</feature>
<feature type="binding site" evidence="8 45">
    <location>
        <position position="187"/>
    </location>
    <ligand>
        <name>Zn(2+)</name>
        <dbReference type="ChEBI" id="CHEBI:29105"/>
        <label>2</label>
    </ligand>
</feature>
<feature type="binding site" evidence="8 45">
    <location>
        <position position="190"/>
    </location>
    <ligand>
        <name>Zn(2+)</name>
        <dbReference type="ChEBI" id="CHEBI:29105"/>
        <label>2</label>
    </ligand>
</feature>
<feature type="binding site" evidence="40 51">
    <location>
        <position position="316"/>
    </location>
    <ligand>
        <name>9-cis-retinoate</name>
        <dbReference type="ChEBI" id="CHEBI:78630"/>
    </ligand>
</feature>
<feature type="binding site" evidence="23 27 28 47 48 49">
    <location>
        <position position="316"/>
    </location>
    <ligand>
        <name>all-trans-retinoate</name>
        <dbReference type="ChEBI" id="CHEBI:35291"/>
    </ligand>
</feature>
<feature type="binding site" evidence="40 51">
    <location>
        <position position="327"/>
    </location>
    <ligand>
        <name>9-cis-retinoate</name>
        <dbReference type="ChEBI" id="CHEBI:78630"/>
    </ligand>
</feature>
<feature type="binding site" evidence="23 27 28 47 48 49">
    <location>
        <position position="327"/>
    </location>
    <ligand>
        <name>all-trans-retinoate</name>
        <dbReference type="ChEBI" id="CHEBI:35291"/>
    </ligand>
</feature>
<feature type="modified residue" description="Phosphoserine" evidence="2">
    <location>
        <position position="21"/>
    </location>
</feature>
<feature type="modified residue" description="Phosphoserine" evidence="12">
    <location>
        <position position="27"/>
    </location>
</feature>
<feature type="modified residue" description="Phosphoserine; by MAPK8 and MAPK9" evidence="2">
    <location>
        <position position="56"/>
    </location>
</feature>
<feature type="modified residue" description="Phosphoserine; by MAPK8 and MAPK9" evidence="2">
    <location>
        <position position="70"/>
    </location>
</feature>
<feature type="modified residue" description="Phosphothreonine; by MAPK8 and MAPK9" evidence="2">
    <location>
        <position position="82"/>
    </location>
</feature>
<feature type="modified residue" description="Phosphoserine" evidence="52">
    <location>
        <position position="129"/>
    </location>
</feature>
<feature type="modified residue" description="N6-acetyllysine; by EP300" evidence="26">
    <location>
        <position position="145"/>
    </location>
</feature>
<feature type="modified residue" description="Phosphoserine" evidence="53">
    <location>
        <position position="259"/>
    </location>
</feature>
<feature type="modified residue" description="Phosphoserine; by MAPK8 and MAPK9" evidence="2">
    <location>
        <position position="260"/>
    </location>
</feature>
<feature type="cross-link" description="Glycyl lysine isopeptide (Lys-Gly) (interchain with G-Cter in SUMO2)" evidence="54">
    <location>
        <position position="4"/>
    </location>
</feature>
<feature type="cross-link" description="Glycyl lysine isopeptide (Lys-Gly) (interchain with G-Cter in SUMO)" evidence="25">
    <location>
        <position position="108"/>
    </location>
</feature>
<feature type="splice variant" id="VSP_056565" description="In isoform 2." evidence="43">
    <location>
        <begin position="1"/>
        <end position="97"/>
    </location>
</feature>
<feature type="sequence variant" id="VAR_014620" description="In dbSNP:rs2234960.">
    <original>P</original>
    <variation>L</variation>
    <location>
        <position position="261"/>
    </location>
</feature>
<feature type="sequence variant" id="VAR_050582" description="In dbSNP:rs1805345.">
    <original>A</original>
    <variation>S</variation>
    <location>
        <position position="327"/>
    </location>
</feature>
<feature type="sequence variant" id="VAR_014621" description="In dbSNP:rs1805345.">
    <original>S</original>
    <variation>I</variation>
    <location>
        <position position="336"/>
    </location>
</feature>
<feature type="sequence variant" id="VAR_050583" description="In dbSNP:rs11542209.">
    <original>A</original>
    <variation>V</variation>
    <location>
        <position position="398"/>
    </location>
</feature>
<feature type="mutagenesis site" description="Abolishes phosphorylation. No change in increase of RARA-mediated transcriptional activity." evidence="12 31">
    <original>S</original>
    <variation>A</variation>
    <location>
        <position position="27"/>
    </location>
</feature>
<feature type="mutagenesis site" description="Increase in RARA-mediated transcriptional activity." evidence="12 31">
    <original>S</original>
    <variation>A</variation>
    <location>
        <position position="27"/>
    </location>
</feature>
<feature type="mutagenesis site" description="Abolishes acetylation by EP300." evidence="26">
    <location>
        <begin position="133"/>
        <end position="156"/>
    </location>
</feature>
<feature type="mutagenesis site" description="Abolishes acetylation by EP300, DNA binding and transcriptional activity. Impairs interaction with EP300." evidence="26">
    <original>K</original>
    <variation>R</variation>
    <location>
        <position position="145"/>
    </location>
</feature>
<feature type="mutagenesis site" description="Abolishes nuclear export." evidence="17">
    <original>FF</original>
    <variation>AA</variation>
    <location>
        <begin position="158"/>
        <end position="159"/>
    </location>
</feature>
<feature type="mutagenesis site" description="Abolishes nuclear localization and transcriptional activity." evidence="17">
    <original>KRTVRK</original>
    <variation>QGTVGQ</variation>
    <location>
        <begin position="160"/>
        <end position="165"/>
    </location>
</feature>
<feature type="mutagenesis site" description="No impact on acetylation by EP300." evidence="26">
    <location>
        <begin position="206"/>
        <end position="216"/>
    </location>
</feature>
<feature type="mutagenesis site" description="Abolished ubiquitination and degradation by UBR5." evidence="41">
    <original>V</original>
    <variation>A</variation>
    <location>
        <position position="280"/>
    </location>
</feature>
<feature type="mutagenesis site" description="No impact on acetylation by EP300." evidence="26">
    <location>
        <begin position="352"/>
        <end position="462"/>
    </location>
</feature>
<feature type="mutagenesis site" description="Abolishes nuclear export." evidence="22">
    <original>MRDM</original>
    <variation>ARDA</variation>
    <location>
        <begin position="357"/>
        <end position="360"/>
    </location>
</feature>
<feature type="mutagenesis site" description="Abolishes nuclear localization." evidence="22">
    <original>LLLRLPALRSIGL</original>
    <variation>ALARLPALRSIGA</variation>
    <location>
        <begin position="418"/>
        <end position="430"/>
    </location>
</feature>
<feature type="mutagenesis site" description="As a heterodimer with NR1H4, impairs interaction with coactivator NCOA1. Impairs transcriptional activity." evidence="40">
    <original>E</original>
    <variation>N</variation>
    <variation>Q</variation>
    <variation>K</variation>
    <variation>A</variation>
    <location>
        <position position="434"/>
    </location>
</feature>
<feature type="strand" evidence="62">
    <location>
        <begin position="131"/>
        <end position="134"/>
    </location>
</feature>
<feature type="turn" evidence="64">
    <location>
        <begin position="136"/>
        <end position="138"/>
    </location>
</feature>
<feature type="strand" evidence="64">
    <location>
        <begin position="141"/>
        <end position="146"/>
    </location>
</feature>
<feature type="strand" evidence="64">
    <location>
        <begin position="149"/>
        <end position="151"/>
    </location>
</feature>
<feature type="helix" evidence="64">
    <location>
        <begin position="153"/>
        <end position="164"/>
    </location>
</feature>
<feature type="strand" evidence="58">
    <location>
        <begin position="172"/>
        <end position="175"/>
    </location>
</feature>
<feature type="turn" evidence="64">
    <location>
        <begin position="181"/>
        <end position="185"/>
    </location>
</feature>
<feature type="helix" evidence="64">
    <location>
        <begin position="188"/>
        <end position="198"/>
    </location>
</feature>
<feature type="helix" evidence="64">
    <location>
        <begin position="202"/>
        <end position="204"/>
    </location>
</feature>
<feature type="helix" evidence="66">
    <location>
        <begin position="226"/>
        <end position="229"/>
    </location>
</feature>
<feature type="helix" evidence="65">
    <location>
        <begin position="232"/>
        <end position="242"/>
    </location>
</feature>
<feature type="helix" evidence="56">
    <location>
        <begin position="246"/>
        <end position="250"/>
    </location>
</feature>
<feature type="turn" evidence="55">
    <location>
        <begin position="251"/>
        <end position="253"/>
    </location>
</feature>
<feature type="strand" evidence="57">
    <location>
        <begin position="258"/>
        <end position="261"/>
    </location>
</feature>
<feature type="helix" evidence="65">
    <location>
        <begin position="264"/>
        <end position="284"/>
    </location>
</feature>
<feature type="helix" evidence="65">
    <location>
        <begin position="289"/>
        <end position="291"/>
    </location>
</feature>
<feature type="helix" evidence="65">
    <location>
        <begin position="294"/>
        <end position="316"/>
    </location>
</feature>
<feature type="helix" evidence="65">
    <location>
        <begin position="317"/>
        <end position="319"/>
    </location>
</feature>
<feature type="strand" evidence="65">
    <location>
        <begin position="321"/>
        <end position="325"/>
    </location>
</feature>
<feature type="strand" evidence="65">
    <location>
        <begin position="329"/>
        <end position="333"/>
    </location>
</feature>
<feature type="helix" evidence="65">
    <location>
        <begin position="334"/>
        <end position="339"/>
    </location>
</feature>
<feature type="turn" evidence="61">
    <location>
        <begin position="340"/>
        <end position="342"/>
    </location>
</feature>
<feature type="helix" evidence="65">
    <location>
        <begin position="343"/>
        <end position="352"/>
    </location>
</feature>
<feature type="helix" evidence="65">
    <location>
        <begin position="354"/>
        <end position="360"/>
    </location>
</feature>
<feature type="helix" evidence="65">
    <location>
        <begin position="364"/>
        <end position="375"/>
    </location>
</feature>
<feature type="strand" evidence="59">
    <location>
        <begin position="380"/>
        <end position="382"/>
    </location>
</feature>
<feature type="helix" evidence="65">
    <location>
        <begin position="386"/>
        <end position="407"/>
    </location>
</feature>
<feature type="helix" evidence="65">
    <location>
        <begin position="414"/>
        <end position="419"/>
    </location>
</feature>
<feature type="helix" evidence="65">
    <location>
        <begin position="422"/>
        <end position="442"/>
    </location>
</feature>
<feature type="strand" evidence="63">
    <location>
        <begin position="444"/>
        <end position="447"/>
    </location>
</feature>
<feature type="helix" evidence="65">
    <location>
        <begin position="449"/>
        <end position="454"/>
    </location>
</feature>
<feature type="helix" evidence="60">
    <location>
        <begin position="457"/>
        <end position="459"/>
    </location>
</feature>
<dbReference type="EMBL" id="X52773">
    <property type="protein sequence ID" value="CAA36982.1"/>
    <property type="molecule type" value="mRNA"/>
</dbReference>
<dbReference type="EMBL" id="AB307705">
    <property type="protein sequence ID" value="BAH02296.1"/>
    <property type="molecule type" value="mRNA"/>
</dbReference>
<dbReference type="EMBL" id="AK131192">
    <property type="protein sequence ID" value="BAG54745.1"/>
    <property type="molecule type" value="mRNA"/>
</dbReference>
<dbReference type="EMBL" id="AC156789">
    <property type="status" value="NOT_ANNOTATED_CDS"/>
    <property type="molecule type" value="Genomic_DNA"/>
</dbReference>
<dbReference type="EMBL" id="AL354796">
    <property type="status" value="NOT_ANNOTATED_CDS"/>
    <property type="molecule type" value="Genomic_DNA"/>
</dbReference>
<dbReference type="EMBL" id="AL669970">
    <property type="status" value="NOT_ANNOTATED_CDS"/>
    <property type="molecule type" value="Genomic_DNA"/>
</dbReference>
<dbReference type="EMBL" id="AL683798">
    <property type="status" value="NOT_ANNOTATED_CDS"/>
    <property type="molecule type" value="Genomic_DNA"/>
</dbReference>
<dbReference type="EMBL" id="CH471090">
    <property type="protein sequence ID" value="EAW88123.1"/>
    <property type="molecule type" value="Genomic_DNA"/>
</dbReference>
<dbReference type="EMBL" id="BC110998">
    <property type="protein sequence ID" value="AAI10999.1"/>
    <property type="molecule type" value="mRNA"/>
</dbReference>
<dbReference type="EMBL" id="DQ303444">
    <property type="protein sequence ID" value="ABB96254.1"/>
    <property type="molecule type" value="Genomic_DNA"/>
</dbReference>
<dbReference type="CCDS" id="CCDS35172.1">
    <molecule id="P19793-1"/>
</dbReference>
<dbReference type="PIR" id="S09592">
    <property type="entry name" value="S09592"/>
</dbReference>
<dbReference type="RefSeq" id="NP_001278850.1">
    <molecule id="P19793-2"/>
    <property type="nucleotide sequence ID" value="NM_001291921.2"/>
</dbReference>
<dbReference type="RefSeq" id="NP_002948.1">
    <molecule id="P19793-1"/>
    <property type="nucleotide sequence ID" value="NM_002957.6"/>
</dbReference>
<dbReference type="PDB" id="1BY4">
    <property type="method" value="X-ray"/>
    <property type="resolution" value="2.10 A"/>
    <property type="chains" value="A/B/C/D=129-209"/>
</dbReference>
<dbReference type="PDB" id="1DSZ">
    <property type="method" value="X-ray"/>
    <property type="resolution" value="1.70 A"/>
    <property type="chains" value="B=129-212"/>
</dbReference>
<dbReference type="PDB" id="1FBY">
    <property type="method" value="X-ray"/>
    <property type="resolution" value="2.25 A"/>
    <property type="chains" value="A/B=224-462"/>
</dbReference>
<dbReference type="PDB" id="1FM6">
    <property type="method" value="X-ray"/>
    <property type="resolution" value="2.10 A"/>
    <property type="chains" value="A/U=225-462"/>
</dbReference>
<dbReference type="PDB" id="1FM9">
    <property type="method" value="X-ray"/>
    <property type="resolution" value="2.10 A"/>
    <property type="chains" value="A=225-462"/>
</dbReference>
<dbReference type="PDB" id="1G1U">
    <property type="method" value="X-ray"/>
    <property type="resolution" value="2.50 A"/>
    <property type="chains" value="A/B/C/D=225-462"/>
</dbReference>
<dbReference type="PDB" id="1G5Y">
    <property type="method" value="X-ray"/>
    <property type="resolution" value="2.00 A"/>
    <property type="chains" value="A/B/C/D=225-462"/>
</dbReference>
<dbReference type="PDB" id="1K74">
    <property type="method" value="X-ray"/>
    <property type="resolution" value="2.30 A"/>
    <property type="chains" value="A=225-462"/>
</dbReference>
<dbReference type="PDB" id="1MV9">
    <property type="method" value="X-ray"/>
    <property type="resolution" value="1.90 A"/>
    <property type="chains" value="A=223-462"/>
</dbReference>
<dbReference type="PDB" id="1MVC">
    <property type="method" value="X-ray"/>
    <property type="resolution" value="1.90 A"/>
    <property type="chains" value="A=223-462"/>
</dbReference>
<dbReference type="PDB" id="1MZN">
    <property type="method" value="X-ray"/>
    <property type="resolution" value="1.90 A"/>
    <property type="chains" value="A/C/E/G=223-462"/>
</dbReference>
<dbReference type="PDB" id="1R0N">
    <property type="method" value="X-ray"/>
    <property type="resolution" value="2.60 A"/>
    <property type="chains" value="A=130-206"/>
</dbReference>
<dbReference type="PDB" id="1RDT">
    <property type="method" value="X-ray"/>
    <property type="resolution" value="2.40 A"/>
    <property type="chains" value="A=225-462"/>
</dbReference>
<dbReference type="PDB" id="1RXR">
    <property type="method" value="NMR"/>
    <property type="chains" value="A=130-212"/>
</dbReference>
<dbReference type="PDB" id="1XLS">
    <property type="method" value="X-ray"/>
    <property type="resolution" value="2.96 A"/>
    <property type="chains" value="A/B/C/D=227-458"/>
</dbReference>
<dbReference type="PDB" id="1XV9">
    <property type="method" value="X-ray"/>
    <property type="resolution" value="2.70 A"/>
    <property type="chains" value="A/C=227-462"/>
</dbReference>
<dbReference type="PDB" id="1XVP">
    <property type="method" value="X-ray"/>
    <property type="resolution" value="2.60 A"/>
    <property type="chains" value="A/C=227-462"/>
</dbReference>
<dbReference type="PDB" id="1YNW">
    <property type="method" value="X-ray"/>
    <property type="resolution" value="3.00 A"/>
    <property type="chains" value="B=130-228"/>
</dbReference>
<dbReference type="PDB" id="2ACL">
    <property type="method" value="X-ray"/>
    <property type="resolution" value="2.80 A"/>
    <property type="chains" value="A/C/E/G=225-462"/>
</dbReference>
<dbReference type="PDB" id="2NLL">
    <property type="method" value="X-ray"/>
    <property type="resolution" value="1.90 A"/>
    <property type="chains" value="A=135-200"/>
</dbReference>
<dbReference type="PDB" id="2P1T">
    <property type="method" value="X-ray"/>
    <property type="resolution" value="1.80 A"/>
    <property type="chains" value="A=223-462"/>
</dbReference>
<dbReference type="PDB" id="2P1U">
    <property type="method" value="X-ray"/>
    <property type="resolution" value="2.20 A"/>
    <property type="chains" value="A=223-462"/>
</dbReference>
<dbReference type="PDB" id="2P1V">
    <property type="method" value="X-ray"/>
    <property type="resolution" value="2.20 A"/>
    <property type="chains" value="A=223-462"/>
</dbReference>
<dbReference type="PDB" id="2ZXZ">
    <property type="method" value="X-ray"/>
    <property type="resolution" value="3.00 A"/>
    <property type="chains" value="A=223-462"/>
</dbReference>
<dbReference type="PDB" id="2ZY0">
    <property type="method" value="X-ray"/>
    <property type="resolution" value="2.90 A"/>
    <property type="chains" value="A/C=223-462"/>
</dbReference>
<dbReference type="PDB" id="3DZU">
    <property type="method" value="X-ray"/>
    <property type="resolution" value="3.20 A"/>
    <property type="chains" value="A=11-462"/>
</dbReference>
<dbReference type="PDB" id="3DZY">
    <property type="method" value="X-ray"/>
    <property type="resolution" value="3.10 A"/>
    <property type="chains" value="A=11-462"/>
</dbReference>
<dbReference type="PDB" id="3E00">
    <property type="method" value="X-ray"/>
    <property type="resolution" value="3.10 A"/>
    <property type="chains" value="A=11-462"/>
</dbReference>
<dbReference type="PDB" id="3E94">
    <property type="method" value="X-ray"/>
    <property type="resolution" value="1.90 A"/>
    <property type="chains" value="A=223-462"/>
</dbReference>
<dbReference type="PDB" id="3FAL">
    <property type="method" value="X-ray"/>
    <property type="resolution" value="2.36 A"/>
    <property type="chains" value="A/C=225-462"/>
</dbReference>
<dbReference type="PDB" id="3FC6">
    <property type="method" value="X-ray"/>
    <property type="resolution" value="2.06 A"/>
    <property type="chains" value="A/C=225-462"/>
</dbReference>
<dbReference type="PDB" id="3FUG">
    <property type="method" value="X-ray"/>
    <property type="resolution" value="2.00 A"/>
    <property type="chains" value="A=223-462"/>
</dbReference>
<dbReference type="PDB" id="3H0A">
    <property type="method" value="X-ray"/>
    <property type="resolution" value="2.10 A"/>
    <property type="chains" value="A=228-455"/>
</dbReference>
<dbReference type="PDB" id="3KWY">
    <property type="method" value="X-ray"/>
    <property type="resolution" value="2.30 A"/>
    <property type="chains" value="A=223-462"/>
</dbReference>
<dbReference type="PDB" id="3NSP">
    <property type="method" value="X-ray"/>
    <property type="resolution" value="2.90 A"/>
    <property type="chains" value="A/B=223-462"/>
</dbReference>
<dbReference type="PDB" id="3NSQ">
    <property type="method" value="X-ray"/>
    <property type="resolution" value="2.60 A"/>
    <property type="chains" value="A/B=223-462"/>
</dbReference>
<dbReference type="PDB" id="3OAP">
    <property type="method" value="X-ray"/>
    <property type="resolution" value="2.05 A"/>
    <property type="chains" value="A=228-458"/>
</dbReference>
<dbReference type="PDB" id="3OZJ">
    <property type="method" value="X-ray"/>
    <property type="resolution" value="2.10 A"/>
    <property type="chains" value="A/C=225-462"/>
</dbReference>
<dbReference type="PDB" id="3PCU">
    <property type="method" value="X-ray"/>
    <property type="resolution" value="2.00 A"/>
    <property type="chains" value="A=229-458"/>
</dbReference>
<dbReference type="PDB" id="3R29">
    <property type="method" value="X-ray"/>
    <property type="resolution" value="2.90 A"/>
    <property type="chains" value="A/B=223-462"/>
</dbReference>
<dbReference type="PDB" id="3R2A">
    <property type="method" value="X-ray"/>
    <property type="resolution" value="3.00 A"/>
    <property type="chains" value="A/B/C/D=223-462"/>
</dbReference>
<dbReference type="PDB" id="3R5M">
    <property type="method" value="X-ray"/>
    <property type="resolution" value="2.80 A"/>
    <property type="chains" value="A/C=223-462"/>
</dbReference>
<dbReference type="PDB" id="3UVV">
    <property type="method" value="X-ray"/>
    <property type="resolution" value="2.95 A"/>
    <property type="chains" value="B=225-462"/>
</dbReference>
<dbReference type="PDB" id="4CN2">
    <property type="method" value="X-ray"/>
    <property type="resolution" value="2.07 A"/>
    <property type="chains" value="C/D=130-212"/>
</dbReference>
<dbReference type="PDB" id="4CN3">
    <property type="method" value="X-ray"/>
    <property type="resolution" value="2.35 A"/>
    <property type="chains" value="A/B/C=130-212, D=130-173, D=175-212"/>
</dbReference>
<dbReference type="PDB" id="4CN5">
    <property type="method" value="X-ray"/>
    <property type="resolution" value="2.00 A"/>
    <property type="chains" value="A/B=130-212"/>
</dbReference>
<dbReference type="PDB" id="4CN7">
    <property type="method" value="X-ray"/>
    <property type="resolution" value="2.34 A"/>
    <property type="chains" value="A/B/E/F=130-212"/>
</dbReference>
<dbReference type="PDB" id="4J5W">
    <property type="method" value="X-ray"/>
    <property type="resolution" value="2.80 A"/>
    <property type="chains" value="C/D=227-462"/>
</dbReference>
<dbReference type="PDB" id="4J5X">
    <property type="method" value="X-ray"/>
    <property type="resolution" value="2.80 A"/>
    <property type="chains" value="C/D=227-462"/>
</dbReference>
<dbReference type="PDB" id="4K4J">
    <property type="method" value="X-ray"/>
    <property type="resolution" value="2.00 A"/>
    <property type="chains" value="A=228-458"/>
</dbReference>
<dbReference type="PDB" id="4K6I">
    <property type="method" value="X-ray"/>
    <property type="resolution" value="2.10 A"/>
    <property type="chains" value="A=228-458"/>
</dbReference>
<dbReference type="PDB" id="4M8E">
    <property type="method" value="X-ray"/>
    <property type="resolution" value="2.40 A"/>
    <property type="chains" value="A=228-458"/>
</dbReference>
<dbReference type="PDB" id="4M8H">
    <property type="method" value="X-ray"/>
    <property type="resolution" value="2.20 A"/>
    <property type="chains" value="A=228-458"/>
</dbReference>
<dbReference type="PDB" id="4N5G">
    <property type="method" value="X-ray"/>
    <property type="resolution" value="2.11 A"/>
    <property type="chains" value="A/B/C/D=223-462"/>
</dbReference>
<dbReference type="PDB" id="4N8R">
    <property type="method" value="X-ray"/>
    <property type="resolution" value="2.03 A"/>
    <property type="chains" value="A/B/C/D=223-462"/>
</dbReference>
<dbReference type="PDB" id="4NQA">
    <property type="method" value="X-ray"/>
    <property type="resolution" value="3.10 A"/>
    <property type="chains" value="A/H=98-462"/>
</dbReference>
<dbReference type="PDB" id="4OC7">
    <property type="method" value="X-ray"/>
    <property type="resolution" value="2.50 A"/>
    <property type="chains" value="A=223-462"/>
</dbReference>
<dbReference type="PDB" id="4POH">
    <property type="method" value="X-ray"/>
    <property type="resolution" value="2.30 A"/>
    <property type="chains" value="A=228-458"/>
</dbReference>
<dbReference type="PDB" id="4POJ">
    <property type="method" value="X-ray"/>
    <property type="resolution" value="2.00 A"/>
    <property type="chains" value="A=228-458"/>
</dbReference>
<dbReference type="PDB" id="4PP3">
    <property type="method" value="X-ray"/>
    <property type="resolution" value="2.00 A"/>
    <property type="chains" value="A=228-458"/>
</dbReference>
<dbReference type="PDB" id="4PP5">
    <property type="method" value="X-ray"/>
    <property type="resolution" value="2.00 A"/>
    <property type="chains" value="A=228-458"/>
</dbReference>
<dbReference type="PDB" id="4RFW">
    <property type="method" value="X-ray"/>
    <property type="resolution" value="2.40 A"/>
    <property type="chains" value="A=228-458"/>
</dbReference>
<dbReference type="PDB" id="4RMC">
    <property type="method" value="X-ray"/>
    <property type="resolution" value="2.70 A"/>
    <property type="chains" value="A=228-458"/>
</dbReference>
<dbReference type="PDB" id="4RMD">
    <property type="method" value="X-ray"/>
    <property type="resolution" value="1.90 A"/>
    <property type="chains" value="A=228-462"/>
</dbReference>
<dbReference type="PDB" id="4RME">
    <property type="method" value="X-ray"/>
    <property type="resolution" value="2.30 A"/>
    <property type="chains" value="A=228-462"/>
</dbReference>
<dbReference type="PDB" id="4ZO1">
    <property type="method" value="X-ray"/>
    <property type="resolution" value="3.22 A"/>
    <property type="chains" value="B=231-455"/>
</dbReference>
<dbReference type="PDB" id="4ZSH">
    <property type="method" value="X-ray"/>
    <property type="resolution" value="1.80 A"/>
    <property type="chains" value="A=223-462"/>
</dbReference>
<dbReference type="PDB" id="5EC9">
    <property type="method" value="X-ray"/>
    <property type="resolution" value="2.30 A"/>
    <property type="chains" value="A=229-456"/>
</dbReference>
<dbReference type="PDB" id="5JI0">
    <property type="method" value="X-ray"/>
    <property type="resolution" value="1.98 A"/>
    <property type="chains" value="A=223-462"/>
</dbReference>
<dbReference type="PDB" id="5LYQ">
    <property type="method" value="X-ray"/>
    <property type="resolution" value="2.17 A"/>
    <property type="chains" value="A=223-462"/>
</dbReference>
<dbReference type="PDB" id="5MJ5">
    <property type="method" value="X-ray"/>
    <property type="resolution" value="1.90 A"/>
    <property type="chains" value="A=229-457"/>
</dbReference>
<dbReference type="PDB" id="5MK4">
    <property type="method" value="X-ray"/>
    <property type="resolution" value="2.00 A"/>
    <property type="chains" value="A/C=229-457"/>
</dbReference>
<dbReference type="PDB" id="5MKJ">
    <property type="method" value="X-ray"/>
    <property type="resolution" value="2.50 A"/>
    <property type="chains" value="A=229-458"/>
</dbReference>
<dbReference type="PDB" id="5MKU">
    <property type="method" value="X-ray"/>
    <property type="resolution" value="1.78 A"/>
    <property type="chains" value="A=229-456"/>
</dbReference>
<dbReference type="PDB" id="5MMW">
    <property type="method" value="X-ray"/>
    <property type="resolution" value="2.70 A"/>
    <property type="chains" value="A=229-457"/>
</dbReference>
<dbReference type="PDB" id="5TBP">
    <property type="method" value="X-ray"/>
    <property type="resolution" value="2.60 A"/>
    <property type="chains" value="A/B/C/D=223-462"/>
</dbReference>
<dbReference type="PDB" id="5UAN">
    <property type="method" value="X-ray"/>
    <property type="resolution" value="3.51 A"/>
    <property type="chains" value="A=98-462"/>
</dbReference>
<dbReference type="PDB" id="5Z12">
    <property type="method" value="X-ray"/>
    <property type="resolution" value="2.75 A"/>
    <property type="chains" value="B/C=228-458"/>
</dbReference>
<dbReference type="PDB" id="5ZQU">
    <property type="method" value="X-ray"/>
    <property type="resolution" value="2.60 A"/>
    <property type="chains" value="A/B/C/D=224-462"/>
</dbReference>
<dbReference type="PDB" id="6A5Y">
    <property type="method" value="X-ray"/>
    <property type="resolution" value="2.10 A"/>
    <property type="chains" value="D=225-462"/>
</dbReference>
<dbReference type="PDB" id="6A5Z">
    <property type="method" value="X-ray"/>
    <property type="resolution" value="2.95 A"/>
    <property type="chains" value="D/L=225-462"/>
</dbReference>
<dbReference type="PDB" id="6A60">
    <property type="method" value="X-ray"/>
    <property type="resolution" value="3.05 A"/>
    <property type="chains" value="D=225-462"/>
</dbReference>
<dbReference type="PDB" id="6FBQ">
    <property type="method" value="X-ray"/>
    <property type="resolution" value="1.60 A"/>
    <property type="chains" value="A/B=130-212"/>
</dbReference>
<dbReference type="PDB" id="6FBR">
    <property type="method" value="X-ray"/>
    <property type="resolution" value="2.10 A"/>
    <property type="chains" value="A/B=130-212"/>
</dbReference>
<dbReference type="PDB" id="6HN6">
    <property type="method" value="X-ray"/>
    <property type="resolution" value="2.71 A"/>
    <property type="chains" value="A=201-462"/>
</dbReference>
<dbReference type="PDB" id="6JNO">
    <property type="method" value="X-ray"/>
    <property type="resolution" value="2.65 A"/>
    <property type="chains" value="A/B/C/D=224-462"/>
</dbReference>
<dbReference type="PDB" id="6JNR">
    <property type="method" value="X-ray"/>
    <property type="resolution" value="2.30 A"/>
    <property type="chains" value="A/B=224-462"/>
</dbReference>
<dbReference type="PDB" id="6L6K">
    <property type="method" value="X-ray"/>
    <property type="resolution" value="1.80 A"/>
    <property type="chains" value="A=224-462"/>
</dbReference>
<dbReference type="PDB" id="6LB4">
    <property type="method" value="X-ray"/>
    <property type="resolution" value="1.50 A"/>
    <property type="chains" value="A=224-462"/>
</dbReference>
<dbReference type="PDB" id="6LB5">
    <property type="method" value="X-ray"/>
    <property type="resolution" value="2.40 A"/>
    <property type="chains" value="A/C=224-462"/>
</dbReference>
<dbReference type="PDB" id="6LB6">
    <property type="method" value="X-ray"/>
    <property type="resolution" value="2.40 A"/>
    <property type="chains" value="A=224-462"/>
</dbReference>
<dbReference type="PDB" id="6SJM">
    <property type="method" value="X-ray"/>
    <property type="resolution" value="2.52 A"/>
    <property type="chains" value="A=229-456"/>
</dbReference>
<dbReference type="PDB" id="6STI">
    <property type="method" value="X-ray"/>
    <property type="resolution" value="1.89 A"/>
    <property type="chains" value="A=223-462"/>
</dbReference>
<dbReference type="PDB" id="6XWG">
    <property type="method" value="X-ray"/>
    <property type="resolution" value="2.40 A"/>
    <property type="chains" value="C=130-212"/>
</dbReference>
<dbReference type="PDB" id="6XWH">
    <property type="method" value="X-ray"/>
    <property type="resolution" value="2.10 A"/>
    <property type="chains" value="C/D=130-212"/>
</dbReference>
<dbReference type="PDB" id="7A77">
    <property type="method" value="X-ray"/>
    <property type="resolution" value="1.50 A"/>
    <property type="chains" value="A=223-462"/>
</dbReference>
<dbReference type="PDB" id="7B88">
    <property type="method" value="X-ray"/>
    <property type="resolution" value="2.38 A"/>
    <property type="chains" value="A=229-456"/>
</dbReference>
<dbReference type="PDB" id="7B9O">
    <property type="method" value="X-ray"/>
    <property type="resolution" value="2.05 A"/>
    <property type="chains" value="A=229-456"/>
</dbReference>
<dbReference type="PDB" id="7BK4">
    <property type="method" value="X-ray"/>
    <property type="resolution" value="2.80 A"/>
    <property type="chains" value="A/C=223-462"/>
</dbReference>
<dbReference type="PDB" id="7CFO">
    <property type="method" value="X-ray"/>
    <property type="resolution" value="2.15 A"/>
    <property type="chains" value="A/B/C/D=224-462"/>
</dbReference>
<dbReference type="PDB" id="7NKE">
    <property type="method" value="X-ray"/>
    <property type="resolution" value="2.35 A"/>
    <property type="chains" value="A/C=223-462"/>
</dbReference>
<dbReference type="PDB" id="7UW2">
    <property type="method" value="X-ray"/>
    <property type="resolution" value="1.88 A"/>
    <property type="chains" value="A=223-462"/>
</dbReference>
<dbReference type="PDB" id="7UW4">
    <property type="method" value="X-ray"/>
    <property type="resolution" value="2.10 A"/>
    <property type="chains" value="A=223-462"/>
</dbReference>
<dbReference type="PDB" id="8HBM">
    <property type="method" value="X-ray"/>
    <property type="resolution" value="3.30 A"/>
    <property type="chains" value="A/E=130-212"/>
</dbReference>
<dbReference type="PDB" id="8PP0">
    <property type="method" value="X-ray"/>
    <property type="resolution" value="1.90 A"/>
    <property type="chains" value="A=223-462"/>
</dbReference>
<dbReference type="PDBsum" id="1BY4"/>
<dbReference type="PDBsum" id="1DSZ"/>
<dbReference type="PDBsum" id="1FBY"/>
<dbReference type="PDBsum" id="1FM6"/>
<dbReference type="PDBsum" id="1FM9"/>
<dbReference type="PDBsum" id="1G1U"/>
<dbReference type="PDBsum" id="1G5Y"/>
<dbReference type="PDBsum" id="1K74"/>
<dbReference type="PDBsum" id="1MV9"/>
<dbReference type="PDBsum" id="1MVC"/>
<dbReference type="PDBsum" id="1MZN"/>
<dbReference type="PDBsum" id="1R0N"/>
<dbReference type="PDBsum" id="1RDT"/>
<dbReference type="PDBsum" id="1RXR"/>
<dbReference type="PDBsum" id="1XLS"/>
<dbReference type="PDBsum" id="1XV9"/>
<dbReference type="PDBsum" id="1XVP"/>
<dbReference type="PDBsum" id="1YNW"/>
<dbReference type="PDBsum" id="2ACL"/>
<dbReference type="PDBsum" id="2NLL"/>
<dbReference type="PDBsum" id="2P1T"/>
<dbReference type="PDBsum" id="2P1U"/>
<dbReference type="PDBsum" id="2P1V"/>
<dbReference type="PDBsum" id="2ZXZ"/>
<dbReference type="PDBsum" id="2ZY0"/>
<dbReference type="PDBsum" id="3DZU"/>
<dbReference type="PDBsum" id="3DZY"/>
<dbReference type="PDBsum" id="3E00"/>
<dbReference type="PDBsum" id="3E94"/>
<dbReference type="PDBsum" id="3FAL"/>
<dbReference type="PDBsum" id="3FC6"/>
<dbReference type="PDBsum" id="3FUG"/>
<dbReference type="PDBsum" id="3H0A"/>
<dbReference type="PDBsum" id="3KWY"/>
<dbReference type="PDBsum" id="3NSP"/>
<dbReference type="PDBsum" id="3NSQ"/>
<dbReference type="PDBsum" id="3OAP"/>
<dbReference type="PDBsum" id="3OZJ"/>
<dbReference type="PDBsum" id="3PCU"/>
<dbReference type="PDBsum" id="3R29"/>
<dbReference type="PDBsum" id="3R2A"/>
<dbReference type="PDBsum" id="3R5M"/>
<dbReference type="PDBsum" id="3UVV"/>
<dbReference type="PDBsum" id="4CN2"/>
<dbReference type="PDBsum" id="4CN3"/>
<dbReference type="PDBsum" id="4CN5"/>
<dbReference type="PDBsum" id="4CN7"/>
<dbReference type="PDBsum" id="4J5W"/>
<dbReference type="PDBsum" id="4J5X"/>
<dbReference type="PDBsum" id="4K4J"/>
<dbReference type="PDBsum" id="4K6I"/>
<dbReference type="PDBsum" id="4M8E"/>
<dbReference type="PDBsum" id="4M8H"/>
<dbReference type="PDBsum" id="4N5G"/>
<dbReference type="PDBsum" id="4N8R"/>
<dbReference type="PDBsum" id="4NQA"/>
<dbReference type="PDBsum" id="4OC7"/>
<dbReference type="PDBsum" id="4POH"/>
<dbReference type="PDBsum" id="4POJ"/>
<dbReference type="PDBsum" id="4PP3"/>
<dbReference type="PDBsum" id="4PP5"/>
<dbReference type="PDBsum" id="4RFW"/>
<dbReference type="PDBsum" id="4RMC"/>
<dbReference type="PDBsum" id="4RMD"/>
<dbReference type="PDBsum" id="4RME"/>
<dbReference type="PDBsum" id="4ZO1"/>
<dbReference type="PDBsum" id="4ZSH"/>
<dbReference type="PDBsum" id="5EC9"/>
<dbReference type="PDBsum" id="5JI0"/>
<dbReference type="PDBsum" id="5LYQ"/>
<dbReference type="PDBsum" id="5MJ5"/>
<dbReference type="PDBsum" id="5MK4"/>
<dbReference type="PDBsum" id="5MKJ"/>
<dbReference type="PDBsum" id="5MKU"/>
<dbReference type="PDBsum" id="5MMW"/>
<dbReference type="PDBsum" id="5TBP"/>
<dbReference type="PDBsum" id="5UAN"/>
<dbReference type="PDBsum" id="5Z12"/>
<dbReference type="PDBsum" id="5ZQU"/>
<dbReference type="PDBsum" id="6A5Y"/>
<dbReference type="PDBsum" id="6A5Z"/>
<dbReference type="PDBsum" id="6A60"/>
<dbReference type="PDBsum" id="6FBQ"/>
<dbReference type="PDBsum" id="6FBR"/>
<dbReference type="PDBsum" id="6HN6"/>
<dbReference type="PDBsum" id="6JNO"/>
<dbReference type="PDBsum" id="6JNR"/>
<dbReference type="PDBsum" id="6L6K"/>
<dbReference type="PDBsum" id="6LB4"/>
<dbReference type="PDBsum" id="6LB5"/>
<dbReference type="PDBsum" id="6LB6"/>
<dbReference type="PDBsum" id="6SJM"/>
<dbReference type="PDBsum" id="6STI"/>
<dbReference type="PDBsum" id="6XWG"/>
<dbReference type="PDBsum" id="6XWH"/>
<dbReference type="PDBsum" id="7A77"/>
<dbReference type="PDBsum" id="7B88"/>
<dbReference type="PDBsum" id="7B9O"/>
<dbReference type="PDBsum" id="7BK4"/>
<dbReference type="PDBsum" id="7CFO"/>
<dbReference type="PDBsum" id="7NKE"/>
<dbReference type="PDBsum" id="7UW2"/>
<dbReference type="PDBsum" id="7UW4"/>
<dbReference type="PDBsum" id="8HBM"/>
<dbReference type="PDBsum" id="8PP0"/>
<dbReference type="BMRB" id="P19793"/>
<dbReference type="EMDB" id="EMD-17542"/>
<dbReference type="SASBDB" id="P19793"/>
<dbReference type="SMR" id="P19793"/>
<dbReference type="BioGRID" id="112168">
    <property type="interactions" value="159"/>
</dbReference>
<dbReference type="ComplexPortal" id="CPX-496">
    <property type="entry name" value="RXRalpha-PXR nuclear receptor complex"/>
</dbReference>
<dbReference type="ComplexPortal" id="CPX-508">
    <property type="entry name" value="RXRalpha-RARalpha retinoic acid receptor complex"/>
</dbReference>
<dbReference type="ComplexPortal" id="CPX-513">
    <property type="entry name" value="RXRalpha-NCOA2 activated retinoic acid receptor complex"/>
</dbReference>
<dbReference type="ComplexPortal" id="CPX-5342">
    <property type="entry name" value="RXRalpha-NCOA1 activated retinoic acid receptor complex"/>
</dbReference>
<dbReference type="ComplexPortal" id="CPX-631">
    <property type="entry name" value="RXRalpha-VDR nuclear hormone receptor complex"/>
</dbReference>
<dbReference type="ComplexPortal" id="CPX-632">
    <property type="entry name" value="RXRalpha-LXRalpha nuclear hormone receptor complex"/>
</dbReference>
<dbReference type="ComplexPortal" id="CPX-654">
    <property type="entry name" value="RXRalpha-TRbeta nuclear hormone receptor complex"/>
</dbReference>
<dbReference type="ComplexPortal" id="CPX-662">
    <property type="entry name" value="RXRalpha-TRalpha nuclear hormone receptor complex"/>
</dbReference>
<dbReference type="ComplexPortal" id="CPX-664">
    <property type="entry name" value="RXRalpha-RXRalpha retinoic acid receptor complex"/>
</dbReference>
<dbReference type="ComplexPortal" id="CPX-678">
    <property type="entry name" value="RXRalpha-LXRbeta nuclear hormone receptor complex"/>
</dbReference>
<dbReference type="ComplexPortal" id="CPX-816">
    <property type="entry name" value="RXRalpha-RARalpha-NCOA2 retinoic acid receptor complex"/>
</dbReference>
<dbReference type="CORUM" id="P19793"/>
<dbReference type="DIP" id="DIP-641N"/>
<dbReference type="ELM" id="P19793"/>
<dbReference type="FunCoup" id="P19793">
    <property type="interactions" value="2539"/>
</dbReference>
<dbReference type="IntAct" id="P19793">
    <property type="interactions" value="58"/>
</dbReference>
<dbReference type="MINT" id="P19793"/>
<dbReference type="STRING" id="9606.ENSP00000419692"/>
<dbReference type="BindingDB" id="P19793"/>
<dbReference type="ChEMBL" id="CHEMBL2061"/>
<dbReference type="DrugBank" id="DB08063">
    <property type="generic name" value="1-BENZYL-3-(4-METHOXYPHENYLAMINO)-4-PHENYLPYRROLE-2,5-DIONE"/>
</dbReference>
<dbReference type="DrugBank" id="DB08402">
    <property type="generic name" value="2-[(2,4-DICHLOROBENZOYL)AMINO]-5-(PYRIMIDIN-2-YLOXY)BENZOIC ACID"/>
</dbReference>
<dbReference type="DrugBank" id="DB07863">
    <property type="generic name" value="2-chloro-5-nitro-N-phenylbenzamide"/>
</dbReference>
<dbReference type="DrugBank" id="DB07557">
    <property type="generic name" value="3,20-Pregnanedione"/>
</dbReference>
<dbReference type="DrugBank" id="DB00459">
    <property type="generic name" value="Acitretin"/>
</dbReference>
<dbReference type="DrugBank" id="DB00210">
    <property type="generic name" value="Adapalene"/>
</dbReference>
<dbReference type="DrugBank" id="DB01436">
    <property type="generic name" value="Alfacalcidol"/>
</dbReference>
<dbReference type="DrugBank" id="DB00523">
    <property type="generic name" value="Alitretinoin"/>
</dbReference>
<dbReference type="DrugBank" id="DB00132">
    <property type="generic name" value="alpha-Linolenic acid"/>
</dbReference>
<dbReference type="DrugBank" id="DB04557">
    <property type="generic name" value="Arachidonic Acid"/>
</dbReference>
<dbReference type="DrugBank" id="DB00307">
    <property type="generic name" value="Bexarotene"/>
</dbReference>
<dbReference type="DrugBank" id="DB01393">
    <property type="generic name" value="Bezafibrate"/>
</dbReference>
<dbReference type="DrugBank" id="DB03756">
    <property type="generic name" value="Doconexent"/>
</dbReference>
<dbReference type="DrugBank" id="DB00749">
    <property type="generic name" value="Etodolac"/>
</dbReference>
<dbReference type="DrugBank" id="DB00926">
    <property type="generic name" value="Etretinate"/>
</dbReference>
<dbReference type="DrugBank" id="DB05956">
    <property type="generic name" value="EVT-101"/>
</dbReference>
<dbReference type="DrugBank" id="DB04224">
    <property type="generic name" value="Oleic Acid"/>
</dbReference>
<dbReference type="DrugBank" id="DB02746">
    <property type="generic name" value="Phthalic Acid"/>
</dbReference>
<dbReference type="DrugBank" id="DB00412">
    <property type="generic name" value="Rosiglitazone"/>
</dbReference>
<dbReference type="DrugBank" id="DB00755">
    <property type="generic name" value="Tretinoin"/>
</dbReference>
<dbReference type="DrugBank" id="DB08601">
    <property type="generic name" value="Tributyltin"/>
</dbReference>
<dbReference type="DrugCentral" id="P19793"/>
<dbReference type="GuidetoPHARMACOLOGY" id="610"/>
<dbReference type="SwissLipids" id="SLP:000001552"/>
<dbReference type="MoonDB" id="P19793">
    <property type="type" value="Predicted"/>
</dbReference>
<dbReference type="GlyGen" id="P19793">
    <property type="glycosylation" value="1 site, 1 O-linked glycan (1 site)"/>
</dbReference>
<dbReference type="iPTMnet" id="P19793"/>
<dbReference type="PhosphoSitePlus" id="P19793"/>
<dbReference type="BioMuta" id="RXRA"/>
<dbReference type="DMDM" id="133701"/>
<dbReference type="jPOST" id="P19793"/>
<dbReference type="MassIVE" id="P19793"/>
<dbReference type="PaxDb" id="9606-ENSP00000419692"/>
<dbReference type="PeptideAtlas" id="P19793"/>
<dbReference type="ProteomicsDB" id="3832"/>
<dbReference type="ProteomicsDB" id="53687">
    <molecule id="P19793-1"/>
</dbReference>
<dbReference type="Pumba" id="P19793"/>
<dbReference type="Antibodypedia" id="3881">
    <property type="antibodies" value="421 antibodies from 41 providers"/>
</dbReference>
<dbReference type="DNASU" id="6256"/>
<dbReference type="Ensembl" id="ENST00000481739.2">
    <molecule id="P19793-1"/>
    <property type="protein sequence ID" value="ENSP00000419692.1"/>
    <property type="gene ID" value="ENSG00000186350.12"/>
</dbReference>
<dbReference type="GeneID" id="6256"/>
<dbReference type="KEGG" id="hsa:6256"/>
<dbReference type="MANE-Select" id="ENST00000481739.2">
    <property type="protein sequence ID" value="ENSP00000419692.1"/>
    <property type="RefSeq nucleotide sequence ID" value="NM_002957.6"/>
    <property type="RefSeq protein sequence ID" value="NP_002948.1"/>
</dbReference>
<dbReference type="UCSC" id="uc004cfb.3">
    <molecule id="P19793-1"/>
    <property type="organism name" value="human"/>
</dbReference>
<dbReference type="AGR" id="HGNC:10477"/>
<dbReference type="CTD" id="6256"/>
<dbReference type="DisGeNET" id="6256"/>
<dbReference type="GeneCards" id="RXRA"/>
<dbReference type="HGNC" id="HGNC:10477">
    <property type="gene designation" value="RXRA"/>
</dbReference>
<dbReference type="HPA" id="ENSG00000186350">
    <property type="expression patterns" value="Tissue enhanced (skeletal)"/>
</dbReference>
<dbReference type="MIM" id="180245">
    <property type="type" value="gene"/>
</dbReference>
<dbReference type="neXtProt" id="NX_P19793"/>
<dbReference type="OpenTargets" id="ENSG00000186350"/>
<dbReference type="PharmGKB" id="PA34890"/>
<dbReference type="VEuPathDB" id="HostDB:ENSG00000186350"/>
<dbReference type="eggNOG" id="KOG3575">
    <property type="taxonomic scope" value="Eukaryota"/>
</dbReference>
<dbReference type="GeneTree" id="ENSGT00940000159789"/>
<dbReference type="HOGENOM" id="CLU_007368_5_4_1"/>
<dbReference type="InParanoid" id="P19793"/>
<dbReference type="OMA" id="ILLRAXF"/>
<dbReference type="OrthoDB" id="5873264at2759"/>
<dbReference type="PAN-GO" id="P19793">
    <property type="GO annotations" value="9 GO annotations based on evolutionary models"/>
</dbReference>
<dbReference type="PhylomeDB" id="P19793"/>
<dbReference type="TreeFam" id="TF352097"/>
<dbReference type="PathwayCommons" id="P19793"/>
<dbReference type="Reactome" id="R-HSA-1368082">
    <property type="pathway name" value="RORA activates gene expression"/>
</dbReference>
<dbReference type="Reactome" id="R-HSA-1368108">
    <property type="pathway name" value="BMAL1:CLOCK,NPAS2 activates circadian gene expression"/>
</dbReference>
<dbReference type="Reactome" id="R-HSA-159418">
    <property type="pathway name" value="Recycling of bile acids and salts"/>
</dbReference>
<dbReference type="Reactome" id="R-HSA-192105">
    <property type="pathway name" value="Synthesis of bile acids and bile salts"/>
</dbReference>
<dbReference type="Reactome" id="R-HSA-193368">
    <property type="pathway name" value="Synthesis of bile acids and bile salts via 7alpha-hydroxycholesterol"/>
</dbReference>
<dbReference type="Reactome" id="R-HSA-193807">
    <property type="pathway name" value="Synthesis of bile acids and bile salts via 27-hydroxycholesterol"/>
</dbReference>
<dbReference type="Reactome" id="R-HSA-1989781">
    <property type="pathway name" value="PPARA activates gene expression"/>
</dbReference>
<dbReference type="Reactome" id="R-HSA-200425">
    <property type="pathway name" value="Carnitine shuttle"/>
</dbReference>
<dbReference type="Reactome" id="R-HSA-211976">
    <property type="pathway name" value="Endogenous sterols"/>
</dbReference>
<dbReference type="Reactome" id="R-HSA-2151201">
    <property type="pathway name" value="Transcriptional activation of mitochondrial biogenesis"/>
</dbReference>
<dbReference type="Reactome" id="R-HSA-2426168">
    <property type="pathway name" value="Activation of gene expression by SREBF (SREBP)"/>
</dbReference>
<dbReference type="Reactome" id="R-HSA-381340">
    <property type="pathway name" value="Transcriptional regulation of white adipocyte differentiation"/>
</dbReference>
<dbReference type="Reactome" id="R-HSA-383280">
    <property type="pathway name" value="Nuclear Receptor transcription pathway"/>
</dbReference>
<dbReference type="Reactome" id="R-HSA-400206">
    <property type="pathway name" value="Regulation of lipid metabolism by PPARalpha"/>
</dbReference>
<dbReference type="Reactome" id="R-HSA-400253">
    <property type="pathway name" value="Circadian Clock"/>
</dbReference>
<dbReference type="Reactome" id="R-HSA-4090294">
    <property type="pathway name" value="SUMOylation of intracellular receptors"/>
</dbReference>
<dbReference type="Reactome" id="R-HSA-5362517">
    <property type="pathway name" value="Signaling by Retinoic Acid"/>
</dbReference>
<dbReference type="Reactome" id="R-HSA-5617472">
    <property type="pathway name" value="Activation of anterior HOX genes in hindbrain development during early embryogenesis"/>
</dbReference>
<dbReference type="Reactome" id="R-HSA-9029558">
    <property type="pathway name" value="NR1H2 &amp; NR1H3 regulate gene expression linked to lipogenesis"/>
</dbReference>
<dbReference type="Reactome" id="R-HSA-9029569">
    <property type="pathway name" value="NR1H3 &amp; NR1H2 regulate gene expression linked to cholesterol transport and efflux"/>
</dbReference>
<dbReference type="Reactome" id="R-HSA-9031525">
    <property type="pathway name" value="NR1H2 &amp; NR1H3 regulate gene expression to limit cholesterol uptake"/>
</dbReference>
<dbReference type="Reactome" id="R-HSA-9031528">
    <property type="pathway name" value="NR1H2 &amp; NR1H3 regulate gene expression linked to triglyceride lipolysis in adipose"/>
</dbReference>
<dbReference type="Reactome" id="R-HSA-9616222">
    <property type="pathway name" value="Transcriptional regulation of granulopoiesis"/>
</dbReference>
<dbReference type="Reactome" id="R-HSA-9623433">
    <property type="pathway name" value="NR1H2 &amp; NR1H3 regulate gene expression to control bile acid homeostasis"/>
</dbReference>
<dbReference type="Reactome" id="R-HSA-9632974">
    <property type="pathway name" value="NR1H2 &amp; NR1H3 regulate gene expression linked to gluconeogenesis"/>
</dbReference>
<dbReference type="Reactome" id="R-HSA-9707564">
    <property type="pathway name" value="Cytoprotection by HMOX1"/>
</dbReference>
<dbReference type="Reactome" id="R-HSA-9707616">
    <property type="pathway name" value="Heme signaling"/>
</dbReference>
<dbReference type="Reactome" id="R-HSA-9839394">
    <property type="pathway name" value="TGFBR3 expression"/>
</dbReference>
<dbReference type="Reactome" id="R-HSA-9841922">
    <property type="pathway name" value="MLL4 and MLL3 complexes regulate expression of PPARG target genes in adipogenesis and hepatic steatosis"/>
</dbReference>
<dbReference type="Reactome" id="R-HSA-9844594">
    <property type="pathway name" value="Transcriptional regulation of brown and beige adipocyte differentiation by EBF2"/>
</dbReference>
<dbReference type="SignaLink" id="P19793"/>
<dbReference type="SIGNOR" id="P19793"/>
<dbReference type="BioGRID-ORCS" id="6256">
    <property type="hits" value="72 hits in 1198 CRISPR screens"/>
</dbReference>
<dbReference type="ChiTaRS" id="RXRA">
    <property type="organism name" value="human"/>
</dbReference>
<dbReference type="EvolutionaryTrace" id="P19793"/>
<dbReference type="GeneWiki" id="Retinoid_X_receptor_alpha"/>
<dbReference type="GenomeRNAi" id="6256"/>
<dbReference type="Pharos" id="P19793">
    <property type="development level" value="Tclin"/>
</dbReference>
<dbReference type="PRO" id="PR:P19793"/>
<dbReference type="Proteomes" id="UP000005640">
    <property type="component" value="Chromosome 9"/>
</dbReference>
<dbReference type="RNAct" id="P19793">
    <property type="molecule type" value="protein"/>
</dbReference>
<dbReference type="Bgee" id="ENSG00000186350">
    <property type="expression patterns" value="Expressed in skin of hip and 205 other cell types or tissues"/>
</dbReference>
<dbReference type="ExpressionAtlas" id="P19793">
    <property type="expression patterns" value="baseline and differential"/>
</dbReference>
<dbReference type="GO" id="GO:0000785">
    <property type="term" value="C:chromatin"/>
    <property type="evidence" value="ECO:0000314"/>
    <property type="project" value="BHF-UCL"/>
</dbReference>
<dbReference type="GO" id="GO:0005829">
    <property type="term" value="C:cytosol"/>
    <property type="evidence" value="ECO:0000304"/>
    <property type="project" value="Reactome"/>
</dbReference>
<dbReference type="GO" id="GO:0005739">
    <property type="term" value="C:mitochondrion"/>
    <property type="evidence" value="ECO:0007669"/>
    <property type="project" value="UniProtKB-SubCell"/>
</dbReference>
<dbReference type="GO" id="GO:0005654">
    <property type="term" value="C:nucleoplasm"/>
    <property type="evidence" value="ECO:0000304"/>
    <property type="project" value="Reactome"/>
</dbReference>
<dbReference type="GO" id="GO:0005634">
    <property type="term" value="C:nucleus"/>
    <property type="evidence" value="ECO:0000314"/>
    <property type="project" value="UniProtKB"/>
</dbReference>
<dbReference type="GO" id="GO:0043235">
    <property type="term" value="C:receptor complex"/>
    <property type="evidence" value="ECO:0000314"/>
    <property type="project" value="UniProtKB"/>
</dbReference>
<dbReference type="GO" id="GO:0090575">
    <property type="term" value="C:RNA polymerase II transcription regulator complex"/>
    <property type="evidence" value="ECO:0000314"/>
    <property type="project" value="BHF-UCL"/>
</dbReference>
<dbReference type="GO" id="GO:0005667">
    <property type="term" value="C:transcription regulator complex"/>
    <property type="evidence" value="ECO:0000353"/>
    <property type="project" value="ComplexPortal"/>
</dbReference>
<dbReference type="GO" id="GO:0050692">
    <property type="term" value="F:DNA binding domain binding"/>
    <property type="evidence" value="ECO:0000314"/>
    <property type="project" value="CAFA"/>
</dbReference>
<dbReference type="GO" id="GO:0003700">
    <property type="term" value="F:DNA-binding transcription factor activity"/>
    <property type="evidence" value="ECO:0000314"/>
    <property type="project" value="MGI"/>
</dbReference>
<dbReference type="GO" id="GO:0000981">
    <property type="term" value="F:DNA-binding transcription factor activity, RNA polymerase II-specific"/>
    <property type="evidence" value="ECO:0000247"/>
    <property type="project" value="NTNU_SB"/>
</dbReference>
<dbReference type="GO" id="GO:0003690">
    <property type="term" value="F:double-stranded DNA binding"/>
    <property type="evidence" value="ECO:0000315"/>
    <property type="project" value="CAFA"/>
</dbReference>
<dbReference type="GO" id="GO:0019899">
    <property type="term" value="F:enzyme binding"/>
    <property type="evidence" value="ECO:0000353"/>
    <property type="project" value="UniProtKB"/>
</dbReference>
<dbReference type="GO" id="GO:0042802">
    <property type="term" value="F:identical protein binding"/>
    <property type="evidence" value="ECO:0000353"/>
    <property type="project" value="MGI"/>
</dbReference>
<dbReference type="GO" id="GO:0050693">
    <property type="term" value="F:LBD domain binding"/>
    <property type="evidence" value="ECO:0000314"/>
    <property type="project" value="CAFA"/>
</dbReference>
<dbReference type="GO" id="GO:0004879">
    <property type="term" value="F:nuclear receptor activity"/>
    <property type="evidence" value="ECO:0000314"/>
    <property type="project" value="GO_Central"/>
</dbReference>
<dbReference type="GO" id="GO:0003707">
    <property type="term" value="F:nuclear steroid receptor activity"/>
    <property type="evidence" value="ECO:0007669"/>
    <property type="project" value="InterPro"/>
</dbReference>
<dbReference type="GO" id="GO:0042809">
    <property type="term" value="F:nuclear vitamin D receptor binding"/>
    <property type="evidence" value="ECO:0000353"/>
    <property type="project" value="BHF-UCL"/>
</dbReference>
<dbReference type="GO" id="GO:0042277">
    <property type="term" value="F:peptide binding"/>
    <property type="evidence" value="ECO:0000314"/>
    <property type="project" value="CAFA"/>
</dbReference>
<dbReference type="GO" id="GO:0001972">
    <property type="term" value="F:retinoic acid binding"/>
    <property type="evidence" value="ECO:0000314"/>
    <property type="project" value="UniProtKB"/>
</dbReference>
<dbReference type="GO" id="GO:0044323">
    <property type="term" value="F:retinoic acid-responsive element binding"/>
    <property type="evidence" value="ECO:0000314"/>
    <property type="project" value="UniProtKB"/>
</dbReference>
<dbReference type="GO" id="GO:0000978">
    <property type="term" value="F:RNA polymerase II cis-regulatory region sequence-specific DNA binding"/>
    <property type="evidence" value="ECO:0000314"/>
    <property type="project" value="MGI"/>
</dbReference>
<dbReference type="GO" id="GO:0000977">
    <property type="term" value="F:RNA polymerase II transcription regulatory region sequence-specific DNA binding"/>
    <property type="evidence" value="ECO:0000314"/>
    <property type="project" value="MGI"/>
</dbReference>
<dbReference type="GO" id="GO:0043565">
    <property type="term" value="F:sequence-specific DNA binding"/>
    <property type="evidence" value="ECO:0000314"/>
    <property type="project" value="AgBase"/>
</dbReference>
<dbReference type="GO" id="GO:1990837">
    <property type="term" value="F:sequence-specific double-stranded DNA binding"/>
    <property type="evidence" value="ECO:0000314"/>
    <property type="project" value="ARUK-UCL"/>
</dbReference>
<dbReference type="GO" id="GO:0000976">
    <property type="term" value="F:transcription cis-regulatory region binding"/>
    <property type="evidence" value="ECO:0000314"/>
    <property type="project" value="BHF-UCL"/>
</dbReference>
<dbReference type="GO" id="GO:0001221">
    <property type="term" value="F:transcription coregulator binding"/>
    <property type="evidence" value="ECO:0000353"/>
    <property type="project" value="UniProtKB"/>
</dbReference>
<dbReference type="GO" id="GO:0008270">
    <property type="term" value="F:zinc ion binding"/>
    <property type="evidence" value="ECO:0000314"/>
    <property type="project" value="CAFA"/>
</dbReference>
<dbReference type="GO" id="GO:0030154">
    <property type="term" value="P:cell differentiation"/>
    <property type="evidence" value="ECO:0000318"/>
    <property type="project" value="GO_Central"/>
</dbReference>
<dbReference type="GO" id="GO:0009755">
    <property type="term" value="P:hormone-mediated signaling pathway"/>
    <property type="evidence" value="ECO:0000314"/>
    <property type="project" value="ComplexPortal"/>
</dbReference>
<dbReference type="GO" id="GO:0042789">
    <property type="term" value="P:mRNA transcription by RNA polymerase II"/>
    <property type="evidence" value="ECO:0000314"/>
    <property type="project" value="ComplexPortal"/>
</dbReference>
<dbReference type="GO" id="GO:0000122">
    <property type="term" value="P:negative regulation of transcription by RNA polymerase II"/>
    <property type="evidence" value="ECO:0000314"/>
    <property type="project" value="BHF-UCL"/>
</dbReference>
<dbReference type="GO" id="GO:0007399">
    <property type="term" value="P:nervous system development"/>
    <property type="evidence" value="ECO:0000318"/>
    <property type="project" value="GO_Central"/>
</dbReference>
<dbReference type="GO" id="GO:0035357">
    <property type="term" value="P:peroxisome proliferator activated receptor signaling pathway"/>
    <property type="evidence" value="ECO:0000314"/>
    <property type="project" value="UniProtKB"/>
</dbReference>
<dbReference type="GO" id="GO:0030501">
    <property type="term" value="P:positive regulation of bone mineralization"/>
    <property type="evidence" value="ECO:0000303"/>
    <property type="project" value="ComplexPortal"/>
</dbReference>
<dbReference type="GO" id="GO:0010875">
    <property type="term" value="P:positive regulation of cholesterol efflux"/>
    <property type="evidence" value="ECO:0000304"/>
    <property type="project" value="BHF-UCL"/>
</dbReference>
<dbReference type="GO" id="GO:0045893">
    <property type="term" value="P:positive regulation of DNA-templated transcription"/>
    <property type="evidence" value="ECO:0000314"/>
    <property type="project" value="GO_Central"/>
</dbReference>
<dbReference type="GO" id="GO:0002157">
    <property type="term" value="P:positive regulation of thyroid hormone receptor signaling pathway"/>
    <property type="evidence" value="ECO:0000314"/>
    <property type="project" value="ComplexPortal"/>
</dbReference>
<dbReference type="GO" id="GO:0045944">
    <property type="term" value="P:positive regulation of transcription by RNA polymerase II"/>
    <property type="evidence" value="ECO:0000314"/>
    <property type="project" value="UniProtKB"/>
</dbReference>
<dbReference type="GO" id="GO:0070564">
    <property type="term" value="P:positive regulation of vitamin D receptor signaling pathway"/>
    <property type="evidence" value="ECO:0000314"/>
    <property type="project" value="ComplexPortal"/>
</dbReference>
<dbReference type="GO" id="GO:0032526">
    <property type="term" value="P:response to retinoic acid"/>
    <property type="evidence" value="ECO:0000315"/>
    <property type="project" value="BHF-UCL"/>
</dbReference>
<dbReference type="GO" id="GO:0048384">
    <property type="term" value="P:retinoic acid receptor signaling pathway"/>
    <property type="evidence" value="ECO:0000314"/>
    <property type="project" value="ComplexPortal"/>
</dbReference>
<dbReference type="CDD" id="cd06956">
    <property type="entry name" value="NR_DBD_RXR"/>
    <property type="match status" value="1"/>
</dbReference>
<dbReference type="CDD" id="cd06943">
    <property type="entry name" value="NR_LBD_RXR_like"/>
    <property type="match status" value="1"/>
</dbReference>
<dbReference type="DisProt" id="DP00062"/>
<dbReference type="FunFam" id="1.10.565.10:FF:000002">
    <property type="entry name" value="Retinoic acid receptor RXR-alpha"/>
    <property type="match status" value="1"/>
</dbReference>
<dbReference type="FunFam" id="3.30.50.10:FF:000005">
    <property type="entry name" value="Retinoic acid receptor RXR-alpha"/>
    <property type="match status" value="1"/>
</dbReference>
<dbReference type="Gene3D" id="3.30.50.10">
    <property type="entry name" value="Erythroid Transcription Factor GATA-1, subunit A"/>
    <property type="match status" value="1"/>
</dbReference>
<dbReference type="Gene3D" id="1.10.565.10">
    <property type="entry name" value="Retinoid X Receptor"/>
    <property type="match status" value="1"/>
</dbReference>
<dbReference type="IDEAL" id="IID00031"/>
<dbReference type="InterPro" id="IPR035500">
    <property type="entry name" value="NHR-like_dom_sf"/>
</dbReference>
<dbReference type="InterPro" id="IPR021780">
    <property type="entry name" value="Nuc_recep-AF1"/>
</dbReference>
<dbReference type="InterPro" id="IPR000536">
    <property type="entry name" value="Nucl_hrmn_rcpt_lig-bd"/>
</dbReference>
<dbReference type="InterPro" id="IPR050274">
    <property type="entry name" value="Nuclear_hormone_rcpt_NR2"/>
</dbReference>
<dbReference type="InterPro" id="IPR001723">
    <property type="entry name" value="Nuclear_hrmn_rcpt"/>
</dbReference>
<dbReference type="InterPro" id="IPR000003">
    <property type="entry name" value="Retinoid-X_rcpt/HNF4"/>
</dbReference>
<dbReference type="InterPro" id="IPR001628">
    <property type="entry name" value="Znf_hrmn_rcpt"/>
</dbReference>
<dbReference type="InterPro" id="IPR013088">
    <property type="entry name" value="Znf_NHR/GATA"/>
</dbReference>
<dbReference type="PANTHER" id="PTHR24083">
    <property type="entry name" value="NUCLEAR HORMONE RECEPTOR"/>
    <property type="match status" value="1"/>
</dbReference>
<dbReference type="Pfam" id="PF00104">
    <property type="entry name" value="Hormone_recep"/>
    <property type="match status" value="1"/>
</dbReference>
<dbReference type="Pfam" id="PF11825">
    <property type="entry name" value="Nuc_recep-AF1"/>
    <property type="match status" value="1"/>
</dbReference>
<dbReference type="Pfam" id="PF00105">
    <property type="entry name" value="zf-C4"/>
    <property type="match status" value="1"/>
</dbReference>
<dbReference type="PRINTS" id="PR00545">
    <property type="entry name" value="RETINOIDXR"/>
</dbReference>
<dbReference type="PRINTS" id="PR00398">
    <property type="entry name" value="STRDHORMONER"/>
</dbReference>
<dbReference type="PRINTS" id="PR00047">
    <property type="entry name" value="STROIDFINGER"/>
</dbReference>
<dbReference type="SMART" id="SM00430">
    <property type="entry name" value="HOLI"/>
    <property type="match status" value="1"/>
</dbReference>
<dbReference type="SMART" id="SM00399">
    <property type="entry name" value="ZnF_C4"/>
    <property type="match status" value="1"/>
</dbReference>
<dbReference type="SUPFAM" id="SSF57716">
    <property type="entry name" value="Glucocorticoid receptor-like (DNA-binding domain)"/>
    <property type="match status" value="1"/>
</dbReference>
<dbReference type="SUPFAM" id="SSF48508">
    <property type="entry name" value="Nuclear receptor ligand-binding domain"/>
    <property type="match status" value="1"/>
</dbReference>
<dbReference type="PROSITE" id="PS51843">
    <property type="entry name" value="NR_LBD"/>
    <property type="match status" value="1"/>
</dbReference>
<dbReference type="PROSITE" id="PS00031">
    <property type="entry name" value="NUCLEAR_REC_DBD_1"/>
    <property type="match status" value="1"/>
</dbReference>
<dbReference type="PROSITE" id="PS51030">
    <property type="entry name" value="NUCLEAR_REC_DBD_2"/>
    <property type="match status" value="1"/>
</dbReference>
<sequence length="462" mass="50811">MDTKHFLPLDFSTQVNSSLTSPTGRGSMAAPSLHPSLGPGIGSPGQLHSPISTLSSPINGMGPPFSVISSPMGPHSMSVPTTPTLGFSTGSPQLSSPMNPVSSSEDIKPPLGLNGVLKVPAHPSGNMASFTKHICAICGDRSSGKHYGVYSCEGCKGFFKRTVRKDLTYTCRDNKDCLIDKRQRNRCQYCRYQKCLAMGMKREAVQEERQRGKDRNENEVESTSSANEDMPVERILEAELAVEPKTETYVEANMGLNPSSPNDPVTNICQAADKQLFTLVEWAKRIPHFSELPLDDQVILLRAGWNELLIASFSHRSIAVKDGILLATGLHVHRNSAHSAGVGAIFDRVLTELVSKMRDMQMDKTELGCLRAIVLFNPDSKGLSNPAEVEALREKVYASLEAYCKHKYPEQPGRFAKLLLRLPALRSIGLKCLEHLFFFKLIGDTPIDTFLMEMLEAPHQMT</sequence>
<reference key="1">
    <citation type="journal article" date="1990" name="Nature">
        <title>Nuclear receptor that identifies a novel retinoic acid response pathway.</title>
        <authorList>
            <person name="Mangelsdorf D.J."/>
            <person name="Ong E.S."/>
            <person name="Dyck J.A."/>
            <person name="Evans R.M."/>
        </authorList>
    </citation>
    <scope>NUCLEOTIDE SEQUENCE [MRNA] (ISOFORM 1)</scope>
    <scope>TISSUE SPECIFICITY</scope>
    <source>
        <tissue>Kidney</tissue>
    </source>
</reference>
<reference key="2">
    <citation type="journal article" date="2008" name="FEBS Lett.">
        <title>DNA-binding profiling of human hormone nuclear receptors via fluorescence correlation spectroscopy in a cell-free system.</title>
        <authorList>
            <person name="Kobayashi T."/>
            <person name="Kodani Y."/>
            <person name="Nozawa A."/>
            <person name="Endo Y."/>
            <person name="Sawasaki T."/>
        </authorList>
    </citation>
    <scope>NUCLEOTIDE SEQUENCE [MRNA] (ISOFORM 1)</scope>
    <scope>DNA-BINDING</scope>
</reference>
<reference key="3">
    <citation type="journal article" date="2004" name="Nat. Genet.">
        <title>Complete sequencing and characterization of 21,243 full-length human cDNAs.</title>
        <authorList>
            <person name="Ota T."/>
            <person name="Suzuki Y."/>
            <person name="Nishikawa T."/>
            <person name="Otsuki T."/>
            <person name="Sugiyama T."/>
            <person name="Irie R."/>
            <person name="Wakamatsu A."/>
            <person name="Hayashi K."/>
            <person name="Sato H."/>
            <person name="Nagai K."/>
            <person name="Kimura K."/>
            <person name="Makita H."/>
            <person name="Sekine M."/>
            <person name="Obayashi M."/>
            <person name="Nishi T."/>
            <person name="Shibahara T."/>
            <person name="Tanaka T."/>
            <person name="Ishii S."/>
            <person name="Yamamoto J."/>
            <person name="Saito K."/>
            <person name="Kawai Y."/>
            <person name="Isono Y."/>
            <person name="Nakamura Y."/>
            <person name="Nagahari K."/>
            <person name="Murakami K."/>
            <person name="Yasuda T."/>
            <person name="Iwayanagi T."/>
            <person name="Wagatsuma M."/>
            <person name="Shiratori A."/>
            <person name="Sudo H."/>
            <person name="Hosoiri T."/>
            <person name="Kaku Y."/>
            <person name="Kodaira H."/>
            <person name="Kondo H."/>
            <person name="Sugawara M."/>
            <person name="Takahashi M."/>
            <person name="Kanda K."/>
            <person name="Yokoi T."/>
            <person name="Furuya T."/>
            <person name="Kikkawa E."/>
            <person name="Omura Y."/>
            <person name="Abe K."/>
            <person name="Kamihara K."/>
            <person name="Katsuta N."/>
            <person name="Sato K."/>
            <person name="Tanikawa M."/>
            <person name="Yamazaki M."/>
            <person name="Ninomiya K."/>
            <person name="Ishibashi T."/>
            <person name="Yamashita H."/>
            <person name="Murakawa K."/>
            <person name="Fujimori K."/>
            <person name="Tanai H."/>
            <person name="Kimata M."/>
            <person name="Watanabe M."/>
            <person name="Hiraoka S."/>
            <person name="Chiba Y."/>
            <person name="Ishida S."/>
            <person name="Ono Y."/>
            <person name="Takiguchi S."/>
            <person name="Watanabe S."/>
            <person name="Yosida M."/>
            <person name="Hotuta T."/>
            <person name="Kusano J."/>
            <person name="Kanehori K."/>
            <person name="Takahashi-Fujii A."/>
            <person name="Hara H."/>
            <person name="Tanase T.-O."/>
            <person name="Nomura Y."/>
            <person name="Togiya S."/>
            <person name="Komai F."/>
            <person name="Hara R."/>
            <person name="Takeuchi K."/>
            <person name="Arita M."/>
            <person name="Imose N."/>
            <person name="Musashino K."/>
            <person name="Yuuki H."/>
            <person name="Oshima A."/>
            <person name="Sasaki N."/>
            <person name="Aotsuka S."/>
            <person name="Yoshikawa Y."/>
            <person name="Matsunawa H."/>
            <person name="Ichihara T."/>
            <person name="Shiohata N."/>
            <person name="Sano S."/>
            <person name="Moriya S."/>
            <person name="Momiyama H."/>
            <person name="Satoh N."/>
            <person name="Takami S."/>
            <person name="Terashima Y."/>
            <person name="Suzuki O."/>
            <person name="Nakagawa S."/>
            <person name="Senoh A."/>
            <person name="Mizoguchi H."/>
            <person name="Goto Y."/>
            <person name="Shimizu F."/>
            <person name="Wakebe H."/>
            <person name="Hishigaki H."/>
            <person name="Watanabe T."/>
            <person name="Sugiyama A."/>
            <person name="Takemoto M."/>
            <person name="Kawakami B."/>
            <person name="Yamazaki M."/>
            <person name="Watanabe K."/>
            <person name="Kumagai A."/>
            <person name="Itakura S."/>
            <person name="Fukuzumi Y."/>
            <person name="Fujimori Y."/>
            <person name="Komiyama M."/>
            <person name="Tashiro H."/>
            <person name="Tanigami A."/>
            <person name="Fujiwara T."/>
            <person name="Ono T."/>
            <person name="Yamada K."/>
            <person name="Fujii Y."/>
            <person name="Ozaki K."/>
            <person name="Hirao M."/>
            <person name="Ohmori Y."/>
            <person name="Kawabata A."/>
            <person name="Hikiji T."/>
            <person name="Kobatake N."/>
            <person name="Inagaki H."/>
            <person name="Ikema Y."/>
            <person name="Okamoto S."/>
            <person name="Okitani R."/>
            <person name="Kawakami T."/>
            <person name="Noguchi S."/>
            <person name="Itoh T."/>
            <person name="Shigeta K."/>
            <person name="Senba T."/>
            <person name="Matsumura K."/>
            <person name="Nakajima Y."/>
            <person name="Mizuno T."/>
            <person name="Morinaga M."/>
            <person name="Sasaki M."/>
            <person name="Togashi T."/>
            <person name="Oyama M."/>
            <person name="Hata H."/>
            <person name="Watanabe M."/>
            <person name="Komatsu T."/>
            <person name="Mizushima-Sugano J."/>
            <person name="Satoh T."/>
            <person name="Shirai Y."/>
            <person name="Takahashi Y."/>
            <person name="Nakagawa K."/>
            <person name="Okumura K."/>
            <person name="Nagase T."/>
            <person name="Nomura N."/>
            <person name="Kikuchi H."/>
            <person name="Masuho Y."/>
            <person name="Yamashita R."/>
            <person name="Nakai K."/>
            <person name="Yada T."/>
            <person name="Nakamura Y."/>
            <person name="Ohara O."/>
            <person name="Isogai T."/>
            <person name="Sugano S."/>
        </authorList>
    </citation>
    <scope>NUCLEOTIDE SEQUENCE [LARGE SCALE MRNA] (ISOFORM 2)</scope>
    <scope>TISSUE SPECIFICITY</scope>
    <source>
        <tissue>Amygdala</tissue>
    </source>
</reference>
<reference key="4">
    <citation type="journal article" date="2004" name="Nature">
        <title>DNA sequence and analysis of human chromosome 9.</title>
        <authorList>
            <person name="Humphray S.J."/>
            <person name="Oliver K."/>
            <person name="Hunt A.R."/>
            <person name="Plumb R.W."/>
            <person name="Loveland J.E."/>
            <person name="Howe K.L."/>
            <person name="Andrews T.D."/>
            <person name="Searle S."/>
            <person name="Hunt S.E."/>
            <person name="Scott C.E."/>
            <person name="Jones M.C."/>
            <person name="Ainscough R."/>
            <person name="Almeida J.P."/>
            <person name="Ambrose K.D."/>
            <person name="Ashwell R.I.S."/>
            <person name="Babbage A.K."/>
            <person name="Babbage S."/>
            <person name="Bagguley C.L."/>
            <person name="Bailey J."/>
            <person name="Banerjee R."/>
            <person name="Barker D.J."/>
            <person name="Barlow K.F."/>
            <person name="Bates K."/>
            <person name="Beasley H."/>
            <person name="Beasley O."/>
            <person name="Bird C.P."/>
            <person name="Bray-Allen S."/>
            <person name="Brown A.J."/>
            <person name="Brown J.Y."/>
            <person name="Burford D."/>
            <person name="Burrill W."/>
            <person name="Burton J."/>
            <person name="Carder C."/>
            <person name="Carter N.P."/>
            <person name="Chapman J.C."/>
            <person name="Chen Y."/>
            <person name="Clarke G."/>
            <person name="Clark S.Y."/>
            <person name="Clee C.M."/>
            <person name="Clegg S."/>
            <person name="Collier R.E."/>
            <person name="Corby N."/>
            <person name="Crosier M."/>
            <person name="Cummings A.T."/>
            <person name="Davies J."/>
            <person name="Dhami P."/>
            <person name="Dunn M."/>
            <person name="Dutta I."/>
            <person name="Dyer L.W."/>
            <person name="Earthrowl M.E."/>
            <person name="Faulkner L."/>
            <person name="Fleming C.J."/>
            <person name="Frankish A."/>
            <person name="Frankland J.A."/>
            <person name="French L."/>
            <person name="Fricker D.G."/>
            <person name="Garner P."/>
            <person name="Garnett J."/>
            <person name="Ghori J."/>
            <person name="Gilbert J.G.R."/>
            <person name="Glison C."/>
            <person name="Grafham D.V."/>
            <person name="Gribble S."/>
            <person name="Griffiths C."/>
            <person name="Griffiths-Jones S."/>
            <person name="Grocock R."/>
            <person name="Guy J."/>
            <person name="Hall R.E."/>
            <person name="Hammond S."/>
            <person name="Harley J.L."/>
            <person name="Harrison E.S.I."/>
            <person name="Hart E.A."/>
            <person name="Heath P.D."/>
            <person name="Henderson C.D."/>
            <person name="Hopkins B.L."/>
            <person name="Howard P.J."/>
            <person name="Howden P.J."/>
            <person name="Huckle E."/>
            <person name="Johnson C."/>
            <person name="Johnson D."/>
            <person name="Joy A.A."/>
            <person name="Kay M."/>
            <person name="Keenan S."/>
            <person name="Kershaw J.K."/>
            <person name="Kimberley A.M."/>
            <person name="King A."/>
            <person name="Knights A."/>
            <person name="Laird G.K."/>
            <person name="Langford C."/>
            <person name="Lawlor S."/>
            <person name="Leongamornlert D.A."/>
            <person name="Leversha M."/>
            <person name="Lloyd C."/>
            <person name="Lloyd D.M."/>
            <person name="Lovell J."/>
            <person name="Martin S."/>
            <person name="Mashreghi-Mohammadi M."/>
            <person name="Matthews L."/>
            <person name="McLaren S."/>
            <person name="McLay K.E."/>
            <person name="McMurray A."/>
            <person name="Milne S."/>
            <person name="Nickerson T."/>
            <person name="Nisbett J."/>
            <person name="Nordsiek G."/>
            <person name="Pearce A.V."/>
            <person name="Peck A.I."/>
            <person name="Porter K.M."/>
            <person name="Pandian R."/>
            <person name="Pelan S."/>
            <person name="Phillimore B."/>
            <person name="Povey S."/>
            <person name="Ramsey Y."/>
            <person name="Rand V."/>
            <person name="Scharfe M."/>
            <person name="Sehra H.K."/>
            <person name="Shownkeen R."/>
            <person name="Sims S.K."/>
            <person name="Skuce C.D."/>
            <person name="Smith M."/>
            <person name="Steward C.A."/>
            <person name="Swarbreck D."/>
            <person name="Sycamore N."/>
            <person name="Tester J."/>
            <person name="Thorpe A."/>
            <person name="Tracey A."/>
            <person name="Tromans A."/>
            <person name="Thomas D.W."/>
            <person name="Wall M."/>
            <person name="Wallis J.M."/>
            <person name="West A.P."/>
            <person name="Whitehead S.L."/>
            <person name="Willey D.L."/>
            <person name="Williams S.A."/>
            <person name="Wilming L."/>
            <person name="Wray P.W."/>
            <person name="Young L."/>
            <person name="Ashurst J.L."/>
            <person name="Coulson A."/>
            <person name="Blocker H."/>
            <person name="Durbin R.M."/>
            <person name="Sulston J.E."/>
            <person name="Hubbard T."/>
            <person name="Jackson M.J."/>
            <person name="Bentley D.R."/>
            <person name="Beck S."/>
            <person name="Rogers J."/>
            <person name="Dunham I."/>
        </authorList>
    </citation>
    <scope>NUCLEOTIDE SEQUENCE [LARGE SCALE GENOMIC DNA]</scope>
</reference>
<reference key="5">
    <citation type="submission" date="2005-07" db="EMBL/GenBank/DDBJ databases">
        <authorList>
            <person name="Mural R.J."/>
            <person name="Istrail S."/>
            <person name="Sutton G.G."/>
            <person name="Florea L."/>
            <person name="Halpern A.L."/>
            <person name="Mobarry C.M."/>
            <person name="Lippert R."/>
            <person name="Walenz B."/>
            <person name="Shatkay H."/>
            <person name="Dew I."/>
            <person name="Miller J.R."/>
            <person name="Flanigan M.J."/>
            <person name="Edwards N.J."/>
            <person name="Bolanos R."/>
            <person name="Fasulo D."/>
            <person name="Halldorsson B.V."/>
            <person name="Hannenhalli S."/>
            <person name="Turner R."/>
            <person name="Yooseph S."/>
            <person name="Lu F."/>
            <person name="Nusskern D.R."/>
            <person name="Shue B.C."/>
            <person name="Zheng X.H."/>
            <person name="Zhong F."/>
            <person name="Delcher A.L."/>
            <person name="Huson D.H."/>
            <person name="Kravitz S.A."/>
            <person name="Mouchard L."/>
            <person name="Reinert K."/>
            <person name="Remington K.A."/>
            <person name="Clark A.G."/>
            <person name="Waterman M.S."/>
            <person name="Eichler E.E."/>
            <person name="Adams M.D."/>
            <person name="Hunkapiller M.W."/>
            <person name="Myers E.W."/>
            <person name="Venter J.C."/>
        </authorList>
    </citation>
    <scope>NUCLEOTIDE SEQUENCE [LARGE SCALE GENOMIC DNA]</scope>
</reference>
<reference key="6">
    <citation type="journal article" date="2004" name="Genome Res.">
        <title>The status, quality, and expansion of the NIH full-length cDNA project: the Mammalian Gene Collection (MGC).</title>
        <authorList>
            <consortium name="The MGC Project Team"/>
        </authorList>
    </citation>
    <scope>NUCLEOTIDE SEQUENCE [LARGE SCALE MRNA] (ISOFORM 1)</scope>
    <source>
        <tissue>Ovary</tissue>
    </source>
</reference>
<reference key="7">
    <citation type="submission" date="2005-11" db="EMBL/GenBank/DDBJ databases">
        <authorList>
            <consortium name="NIEHS SNPs program"/>
        </authorList>
    </citation>
    <scope>NUCLEOTIDE SEQUENCE [GENOMIC DNA] OF 11-462</scope>
</reference>
<reference key="8">
    <citation type="journal article" date="1992" name="Cell">
        <title>9-cis retinoic acid is a high affinity ligand for the retinoid X receptor.</title>
        <authorList>
            <person name="Heyman R.A."/>
            <person name="Mangelsdorf D.J."/>
            <person name="Dyck J.A."/>
            <person name="Stein R.B."/>
            <person name="Eichele G."/>
            <person name="Evans R.M."/>
            <person name="Thaller C."/>
        </authorList>
    </citation>
    <scope>FUNCTION</scope>
    <scope>IDENTIFICATION OF LIGAND</scope>
</reference>
<reference key="9">
    <citation type="journal article" date="1997" name="Cell">
        <title>Nuclear receptor coactivator ACTR is a novel histone acetyltransferase and forms a multimeric activation complex with P/CAF and CBP/p300.</title>
        <authorList>
            <person name="Chen H."/>
            <person name="Lin R.J."/>
            <person name="Schiltz R.L."/>
            <person name="Chakravarti D."/>
            <person name="Nash A."/>
            <person name="Nagy L."/>
            <person name="Privalsky M.L."/>
            <person name="Nakatani Y."/>
            <person name="Evans R.M."/>
        </authorList>
    </citation>
    <scope>FUNCTION</scope>
    <scope>INTERACTION WITH NCOA3</scope>
</reference>
<reference key="10">
    <citation type="journal article" date="1999" name="J. Biol. Chem.">
        <title>A nuclear factor ASC-2, as a cancer-amplified transcriptional coactivator essential for ligand-dependent transactivation by nuclear receptors in vivo.</title>
        <authorList>
            <person name="Lee S.-K."/>
            <person name="Anzick S.L."/>
            <person name="Choi J.-E."/>
            <person name="Bubendorf L."/>
            <person name="Guan X.-Y."/>
            <person name="Jung Y.-K."/>
            <person name="Kallioniemi O.-P."/>
            <person name="Kononen J."/>
            <person name="Trent J.M."/>
            <person name="Azorsa D."/>
            <person name="Jhun B.-H."/>
            <person name="Cheong J.H."/>
            <person name="Lee Y.C."/>
            <person name="Meltzer P.S."/>
            <person name="Lee J.W."/>
        </authorList>
    </citation>
    <scope>INTERACTION WITH NCOA6</scope>
</reference>
<reference key="11">
    <citation type="journal article" date="1999" name="Mol. Cell. Endocrinol.">
        <title>Conserved amino acids in the ligand-binding and tau(i) domains of the peroxisome proliferator-activated receptor alpha are necessary for heterodimerization with RXR.</title>
        <authorList>
            <person name="Gorla-Bajszczak A."/>
            <person name="Juge-Aubry C."/>
            <person name="Pernin A."/>
            <person name="Burger A.G."/>
            <person name="Meier C.A."/>
        </authorList>
    </citation>
    <scope>FUNCTION</scope>
    <scope>HETERODIMERIZATION WITH PPARA</scope>
</reference>
<reference key="12">
    <citation type="journal article" date="2000" name="Biochem. Biophys. Res. Commun.">
        <title>Serine 27, a human retinoid X receptor alpha residue, phosphorylated by protein kinase A is essential for cyclicAMP-mediated downregulation of RXRalpha function.</title>
        <authorList>
            <person name="Harish S."/>
            <person name="Ashok M.S."/>
            <person name="Khanam T."/>
            <person name="Rangarajan P.N."/>
        </authorList>
    </citation>
    <scope>FUNCTION</scope>
    <scope>PHOSPHORYLATION AT SER-27</scope>
    <scope>MUTAGENESIS OF SER-27</scope>
</reference>
<reference key="13">
    <citation type="journal article" date="2000" name="J. Biol. Chem.">
        <title>Direct functional interactions between insulin-like growth factor-binding protein-3 and retinoid X receptor-alpha regulate transcriptional signaling and apoptosis.</title>
        <authorList>
            <person name="Liu B."/>
            <person name="Lee H.Y."/>
            <person name="Weinzimer S.A."/>
            <person name="Powell D.R."/>
            <person name="Clifford J.L."/>
            <person name="Kurie J.M."/>
            <person name="Cohen P."/>
        </authorList>
    </citation>
    <scope>FUNCTION</scope>
    <scope>SUBCELLULAR LOCATION</scope>
    <scope>INTERACTION WITH IGFBP3</scope>
</reference>
<reference key="14">
    <citation type="journal article" date="2001" name="Mol. Cell. Biol.">
        <title>PSF is a novel corepressor that mediates its effect through Sin3A and the DNA binding domain of nuclear hormone receptors.</title>
        <authorList>
            <person name="Mathur M."/>
            <person name="Tucker P.W."/>
            <person name="Samuels H.H."/>
        </authorList>
    </citation>
    <scope>INTERACTION WITH SFPQ</scope>
</reference>
<reference key="15">
    <citation type="journal article" date="2002" name="Hepatology">
        <title>Interaction of hepatitis C virus core protein with retinoid X receptor alpha modulates its transcriptional activity.</title>
        <authorList>
            <person name="Tsutsumi T."/>
            <person name="Suzuki T."/>
            <person name="Shimoike T."/>
            <person name="Suzuki R."/>
            <person name="Moriya K."/>
            <person name="Shintani Y."/>
            <person name="Fujie H."/>
            <person name="Matsuura Y."/>
            <person name="Koike K."/>
            <person name="Miyamura T."/>
        </authorList>
    </citation>
    <scope>INTERACTION WITH HCV CORE PROTEIN (MICROBIAL INFECTION) AND PPARA</scope>
    <scope>SUBCELLULAR LOCATION</scope>
    <scope>FUNCTION</scope>
</reference>
<reference key="16">
    <citation type="journal article" date="2002" name="J. Biol. Chem.">
        <title>Identification of protein arginine methyltransferase 2 as a coactivator for estrogen receptor alpha.</title>
        <authorList>
            <person name="Qi C."/>
            <person name="Chang J."/>
            <person name="Zhu Y."/>
            <person name="Yeldandi A.V."/>
            <person name="Rao S.M."/>
            <person name="Zhu Y.-J."/>
        </authorList>
    </citation>
    <scope>INTERACTION WITH PRMT2</scope>
</reference>
<reference key="17">
    <citation type="journal article" date="2002" name="Mol. Endocrinol.">
        <title>Retinoid X receptor dominates the nuclear import and export of the unliganded vitamin D receptor.</title>
        <authorList>
            <person name="Pruefer K."/>
            <person name="Barsony J."/>
        </authorList>
    </citation>
    <scope>SUBCELLULAR LOCATION</scope>
    <scope>MUTAGENESIS OF 158-PHE-PHE-159 AND 160-LYS--LYS-165</scope>
</reference>
<reference key="18">
    <citation type="journal article" date="2004" name="Biochem. Biophys. Res. Commun.">
        <title>ERBP, a novel estrogen receptor binding protein enhancing the activity of estrogen receptor.</title>
        <authorList>
            <person name="Bu H."/>
            <person name="Kashireddy P."/>
            <person name="Chang J."/>
            <person name="Zhu Y.T."/>
            <person name="Zhang Z."/>
            <person name="Zheng W."/>
            <person name="Rao S.M."/>
            <person name="Zhu Y.-J."/>
        </authorList>
    </citation>
    <scope>INTERACTION WITH DNTTIP2</scope>
</reference>
<reference key="19">
    <citation type="journal article" date="2004" name="J. Biol. Chem.">
        <title>The RING finger protein, RNF8, interacts with retinoid X receptor alpha and enhances its transcription-stimulating activity.</title>
        <authorList>
            <person name="Takano Y."/>
            <person name="Adachi S."/>
            <person name="Okuno M."/>
            <person name="Muto Y."/>
            <person name="Yoshioka T."/>
            <person name="Matsushima-Nishiwaki R."/>
            <person name="Tsurumi H."/>
            <person name="Ito K."/>
            <person name="Friedman S.L."/>
            <person name="Moriwaki H."/>
            <person name="Kojima S."/>
            <person name="Okano Y."/>
        </authorList>
    </citation>
    <scope>INTERACTION WITH RNF8</scope>
</reference>
<reference key="20">
    <citation type="journal article" date="2004" name="Mol. Cell. Biol.">
        <title>Retinoid X receptor regulates Nur77/TR3-dependent apoptosis [corrected] by modulating its nuclear export and mitochondrial targeting.</title>
        <authorList>
            <person name="Cao X."/>
            <person name="Liu W."/>
            <person name="Lin F."/>
            <person name="Li H."/>
            <person name="Kolluri S.K."/>
            <person name="Lin B."/>
            <person name="Han Y.H."/>
            <person name="Dawson M.I."/>
            <person name="Zhang X.K."/>
        </authorList>
    </citation>
    <scope>INTERACTION WITH RARA AND NR4A1</scope>
    <scope>SUBCELLULAR LOCATION</scope>
    <scope>MUTAGENESIS OF 357-MET--MET-360 AND 418-LEU--LEU-430</scope>
</reference>
<reference key="21">
    <citation type="journal article" date="2006" name="J. Biol. Chem.">
        <title>9-cis-retinoic acid up-regulates expression of transcriptional coregulator PELP1, a novel coactivator of the retinoid X receptor alpha pathway.</title>
        <authorList>
            <person name="Singh R.R."/>
            <person name="Gururaj A.E."/>
            <person name="Vadlamudi R.K."/>
            <person name="Kumar R."/>
        </authorList>
    </citation>
    <scope>INTERACTION WITH PELP1</scope>
</reference>
<reference key="22">
    <citation type="journal article" date="2006" name="J. Biol. Chem.">
        <title>Negative modulation of RXRalpha transcriptional activity by small ubiquitin-related modifier (SUMO) modification and its reversal by SUMO-specific protease SUSP1.</title>
        <authorList>
            <person name="Choi S.J."/>
            <person name="Chung S.S."/>
            <person name="Rho E.J."/>
            <person name="Lee H.W."/>
            <person name="Lee M.H."/>
            <person name="Choi H.S."/>
            <person name="Seol J.H."/>
            <person name="Baek S.H."/>
            <person name="Bang O.S."/>
            <person name="Chung C.H."/>
        </authorList>
    </citation>
    <scope>SUMOYLATION AT LYS-108</scope>
    <scope>INTERACTION WITH SENP6</scope>
</reference>
<reference key="23">
    <citation type="journal article" date="2007" name="Mol. Endocrinol.">
        <title>Orphan receptor TR3 attenuates the p300-induced acetylation of retinoid X receptor-alpha.</title>
        <authorList>
            <person name="Zhao W.X."/>
            <person name="Tian M."/>
            <person name="Zhao B.X."/>
            <person name="Li G.D."/>
            <person name="Liu B."/>
            <person name="Zhan Y.Y."/>
            <person name="Chen H.Z."/>
            <person name="Wu Q."/>
        </authorList>
    </citation>
    <scope>SUBUNIT</scope>
    <scope>INTERACTION WITH EP300 AND NR4A1</scope>
    <scope>SUBCELLULAR LOCATION</scope>
    <scope>ACETYLATION AT LYS-145 BY EP300</scope>
    <scope>MUTAGENESIS OF 133-HIS--LYS-156; LYS-145; 206-GLN--ASN-216 AND 352-GLU--THR-462</scope>
</reference>
<reference key="24">
    <citation type="journal article" date="2007" name="Mol. Cell. Proteomics">
        <title>Lysine trimethylation of retinoic acid receptor-alpha: a novel means to regulate receptor function.</title>
        <authorList>
            <person name="Huq M.D."/>
            <person name="Tsai N.-P."/>
            <person name="Khan S.A."/>
            <person name="Wei L.-N."/>
        </authorList>
    </citation>
    <scope>HETERODIMERIZATION WITH RARA</scope>
</reference>
<reference key="25">
    <citation type="journal article" date="2008" name="Proc. Natl. Acad. Sci. U.S.A.">
        <title>A quantitative atlas of mitotic phosphorylation.</title>
        <authorList>
            <person name="Dephoure N."/>
            <person name="Zhou C."/>
            <person name="Villen J."/>
            <person name="Beausoleil S.A."/>
            <person name="Bakalarski C.E."/>
            <person name="Elledge S.J."/>
            <person name="Gygi S.P."/>
        </authorList>
    </citation>
    <scope>IDENTIFICATION BY MASS SPECTROMETRY [LARGE SCALE ANALYSIS]</scope>
    <source>
        <tissue>Cervix carcinoma</tissue>
    </source>
</reference>
<reference key="26">
    <citation type="journal article" date="2009" name="Mol. Pharmacol.">
        <title>The basic helix-loop-helix proteins differentiated embryo chondrocyte (DEC) 1 and DEC2 function as corepressors of retinoid X receptors.</title>
        <authorList>
            <person name="Cho Y."/>
            <person name="Noshiro M."/>
            <person name="Choi M."/>
            <person name="Morita K."/>
            <person name="Kawamoto T."/>
            <person name="Fujimoto K."/>
            <person name="Kato Y."/>
            <person name="Makishima M."/>
        </authorList>
    </citation>
    <scope>INTERACTION WITH BHLHE40/DEC1; BHLHE41/DEC2; NCOA1; MED1; NCOR1 AND NCOR2</scope>
</reference>
<reference key="27">
    <citation type="journal article" date="2010" name="BMC Mol. Biol.">
        <title>The transforming acidic coiled coil (TACC1) protein modulates the transcriptional activity of the nuclear receptors TR and RAR.</title>
        <authorList>
            <person name="Guyot R."/>
            <person name="Vincent S."/>
            <person name="Bertin J."/>
            <person name="Samarut J."/>
            <person name="Ravel-Chapuis P."/>
        </authorList>
    </citation>
    <scope>INTERACTION WITH TACC1</scope>
</reference>
<reference key="28">
    <citation type="journal article" date="2010" name="Endocrinology">
        <title>Activity of retinoic acid receptor-alpha is directly regulated at its protein kinase A sites in response to follicle-stimulating hormone signaling.</title>
        <authorList>
            <person name="Santos N.C."/>
            <person name="Kim K.H."/>
        </authorList>
    </citation>
    <scope>FUNCTION</scope>
    <scope>HETERODIMERIZATION WITH RARA</scope>
    <scope>MUTAGENESIS OF SER-27</scope>
</reference>
<reference key="29">
    <citation type="journal article" date="2010" name="Sci. Signal.">
        <title>Quantitative phosphoproteomics reveals widespread full phosphorylation site occupancy during mitosis.</title>
        <authorList>
            <person name="Olsen J.V."/>
            <person name="Vermeulen M."/>
            <person name="Santamaria A."/>
            <person name="Kumar C."/>
            <person name="Miller M.L."/>
            <person name="Jensen L.J."/>
            <person name="Gnad F."/>
            <person name="Cox J."/>
            <person name="Jensen T.S."/>
            <person name="Nigg E.A."/>
            <person name="Brunak S."/>
            <person name="Mann M."/>
        </authorList>
    </citation>
    <scope>IDENTIFICATION BY MASS SPECTROMETRY [LARGE SCALE ANALYSIS]</scope>
    <source>
        <tissue>Cervix carcinoma</tissue>
    </source>
</reference>
<reference key="30">
    <citation type="journal article" date="2013" name="J. Proteome Res.">
        <title>Toward a comprehensive characterization of a human cancer cell phosphoproteome.</title>
        <authorList>
            <person name="Zhou H."/>
            <person name="Di Palma S."/>
            <person name="Preisinger C."/>
            <person name="Peng M."/>
            <person name="Polat A.N."/>
            <person name="Heck A.J."/>
            <person name="Mohammed S."/>
        </authorList>
    </citation>
    <scope>PHOSPHORYLATION [LARGE SCALE ANALYSIS] AT SER-129</scope>
    <scope>IDENTIFICATION BY MASS SPECTROMETRY [LARGE SCALE ANALYSIS]</scope>
    <source>
        <tissue>Erythroleukemia</tissue>
    </source>
</reference>
<reference key="31">
    <citation type="journal article" date="2014" name="J. Proteomics">
        <title>An enzyme assisted RP-RPLC approach for in-depth analysis of human liver phosphoproteome.</title>
        <authorList>
            <person name="Bian Y."/>
            <person name="Song C."/>
            <person name="Cheng K."/>
            <person name="Dong M."/>
            <person name="Wang F."/>
            <person name="Huang J."/>
            <person name="Sun D."/>
            <person name="Wang L."/>
            <person name="Ye M."/>
            <person name="Zou H."/>
        </authorList>
    </citation>
    <scope>PHOSPHORYLATION [LARGE SCALE ANALYSIS] AT SER-259</scope>
    <scope>IDENTIFICATION BY MASS SPECTROMETRY [LARGE SCALE ANALYSIS]</scope>
    <scope>TISSUE SPECIFICITY</scope>
    <source>
        <tissue>Liver</tissue>
    </source>
</reference>
<reference key="32">
    <citation type="journal article" date="2014" name="Nat. Commun.">
        <title>Retinoid X receptor alpha attenuates host antiviral response by suppressing type I interferon.</title>
        <authorList>
            <person name="Ma F."/>
            <person name="Liu S.Y."/>
            <person name="Razani B."/>
            <person name="Arora N."/>
            <person name="Li B."/>
            <person name="Kagechika H."/>
            <person name="Tontonoz P."/>
            <person name="Nunez V."/>
            <person name="Ricote M."/>
            <person name="Cheng G."/>
        </authorList>
    </citation>
    <scope>FUNCTION</scope>
</reference>
<reference key="33">
    <citation type="journal article" date="2015" name="Brain">
        <title>Retinoid X receptor activation reverses age-related deficiencies in myelin debris phagocytosis and remyelination.</title>
        <authorList>
            <person name="Natrajan M.S."/>
            <person name="de la Fuente A.G."/>
            <person name="Crawford A.H."/>
            <person name="Linehan E."/>
            <person name="Nunez V."/>
            <person name="Johnson K.R."/>
            <person name="Wu T."/>
            <person name="Fitzgerald D.C."/>
            <person name="Ricote M."/>
            <person name="Bielekova B."/>
            <person name="Franklin R.J."/>
        </authorList>
    </citation>
    <scope>FUNCTION</scope>
    <scope>TISSUE SPECIFICITY</scope>
    <scope>REPRESSION BY AGING</scope>
</reference>
<reference key="34">
    <citation type="journal article" date="2017" name="Nat. Struct. Mol. Biol.">
        <title>Site-specific mapping of the human SUMO proteome reveals co-modification with phosphorylation.</title>
        <authorList>
            <person name="Hendriks I.A."/>
            <person name="Lyon D."/>
            <person name="Young C."/>
            <person name="Jensen L.J."/>
            <person name="Vertegaal A.C."/>
            <person name="Nielsen M.L."/>
        </authorList>
    </citation>
    <scope>SUMOYLATION [LARGE SCALE ANALYSIS] AT LYS-4</scope>
    <scope>IDENTIFICATION BY MASS SPECTROMETRY [LARGE SCALE ANALYSIS]</scope>
</reference>
<reference key="35">
    <citation type="journal article" date="2017" name="Proc. Natl. Acad. Sci. U.S.A.">
        <title>MicroRNA-10a is crucial for endothelial response to different flow patterns via interaction of retinoid acid receptors and histone deacetylases.</title>
        <authorList>
            <person name="Lee D.Y."/>
            <person name="Lin T.E."/>
            <person name="Lee C.I."/>
            <person name="Zhou J."/>
            <person name="Huang Y.H."/>
            <person name="Lee P.L."/>
            <person name="Shih Y.T."/>
            <person name="Chien S."/>
            <person name="Chiu J.J."/>
        </authorList>
    </citation>
    <scope>FUNCTION</scope>
    <scope>INTERACTION WITH RARA</scope>
    <scope>SUBCELLULAR LOCATION</scope>
    <scope>INDUCTION BY PULSATILE SHEAR STRESS</scope>
</reference>
<reference key="36">
    <citation type="journal article" date="2017" name="Sci. Rep.">
        <title>Functional analyses of a novel missense and other mutations of the vitamin D receptor in association with alopecia.</title>
        <authorList>
            <person name="Tamura M."/>
            <person name="Ishizawa M."/>
            <person name="Isojima T."/>
            <person name="Oezen S."/>
            <person name="Oka A."/>
            <person name="Makishima M."/>
            <person name="Kitanaka S."/>
        </authorList>
    </citation>
    <scope>INTERACTION WITH VDR</scope>
</reference>
<reference key="37">
    <citation type="journal article" date="2018" name="Aging Cell">
        <title>The nuclear receptor RXRA controls cellular senescence by regulating calcium signaling.</title>
        <authorList>
            <person name="Ma X."/>
            <person name="Warnier M."/>
            <person name="Raynard C."/>
            <person name="Ferrand M."/>
            <person name="Kirsh O."/>
            <person name="Defossez P.A."/>
            <person name="Martin N."/>
            <person name="Bernard D."/>
        </authorList>
    </citation>
    <scope>FUNCTION</scope>
    <scope>TISSUE SPECIFICITY</scope>
</reference>
<reference key="38">
    <citation type="journal article" date="2023" name="Mol. Cell">
        <title>UBR5 forms ligand-dependent complexes on chromatin to regulate nuclear hormone receptor stability.</title>
        <authorList>
            <person name="Tsai J.M."/>
            <person name="Aguirre J.D."/>
            <person name="Li Y.D."/>
            <person name="Brown J."/>
            <person name="Focht V."/>
            <person name="Kater L."/>
            <person name="Kempf G."/>
            <person name="Sandoval B."/>
            <person name="Schmitt S."/>
            <person name="Rutter J.C."/>
            <person name="Galli P."/>
            <person name="Sandate C.R."/>
            <person name="Cutler J.A."/>
            <person name="Zou C."/>
            <person name="Donovan K.A."/>
            <person name="Lumpkin R.J."/>
            <person name="Cavadini S."/>
            <person name="Park P.M.C."/>
            <person name="Sievers Q."/>
            <person name="Hatton C."/>
            <person name="Ener E."/>
            <person name="Regalado B.D."/>
            <person name="Sperling M.T."/>
            <person name="Slabicki M."/>
            <person name="Kim J."/>
            <person name="Zon R."/>
            <person name="Zhang Z."/>
            <person name="Miller P.G."/>
            <person name="Belizaire R."/>
            <person name="Sperling A.S."/>
            <person name="Fischer E.S."/>
            <person name="Irizarry R."/>
            <person name="Armstrong S.A."/>
            <person name="Thomae N.H."/>
            <person name="Ebert B.L."/>
        </authorList>
    </citation>
    <scope>FUNCTION</scope>
    <scope>UBIQUITINATION</scope>
    <scope>MUTAGENESIS OF VAL-280</scope>
</reference>
<reference key="39">
    <citation type="journal article" date="1994" name="Eur. J. Biochem.">
        <title>NMR assignments and secondary structure of the retinoid X receptor alpha DNA-binding domain. Evidence for the novel C-terminal helix.</title>
        <authorList>
            <person name="Lee M.S."/>
            <person name="Sem D.S."/>
            <person name="Kliewer S.A."/>
            <person name="Provencal J."/>
            <person name="Evans R.M."/>
            <person name="Wright P.E."/>
        </authorList>
    </citation>
    <scope>STRUCTURE BY NMR OF 130-223</scope>
</reference>
<reference key="40">
    <citation type="journal article" date="1995" name="Nature">
        <title>Structural determinants of nuclear receptor assembly on DNA direct repeats.</title>
        <authorList>
            <person name="Rastinejad F."/>
            <person name="Perlmann T."/>
            <person name="Evans R.M."/>
            <person name="Sigler P.B."/>
        </authorList>
    </citation>
    <scope>X-RAY CRYSTALLOGRAPHY (1.9 ANGSTROMS) OF 130-209</scope>
</reference>
<reference key="41">
    <citation type="journal article" date="1995" name="Nature">
        <title>Crystal structure of the ligand-binding domain of the human nuclear receptor RXR-alpha.</title>
        <authorList>
            <person name="Bourguet W."/>
            <person name="Ruff M."/>
            <person name="Chambon P."/>
            <person name="Gronemeyer H."/>
            <person name="Moras D."/>
        </authorList>
    </citation>
    <scope>X-RAY CRYSTALLOGRAPHY (2.7 ANGSTROMS) OF 225-462</scope>
</reference>
<reference key="42">
    <citation type="journal article" date="1998" name="J. Mol. Biol.">
        <title>High-resolution solution structure of the retinoid X receptor DNA-binding domain.</title>
        <authorList>
            <person name="Holmbeck S.M."/>
            <person name="Foster M.P."/>
            <person name="Casimiro D.R."/>
            <person name="Sem D.S."/>
            <person name="Dyson H.J."/>
            <person name="Wright P.E."/>
        </authorList>
    </citation>
    <scope>STRUCTURE BY NMR OF 130-212</scope>
</reference>
<reference key="43">
    <citation type="journal article" date="2000" name="EMBO J.">
        <title>Structure of the RXR-RAR DNA-binding complex on the retinoic acid response element DR1.</title>
        <authorList>
            <person name="Rastinejad F."/>
            <person name="Wagner T."/>
            <person name="Zhao Q."/>
            <person name="Khorasanizadeh S."/>
        </authorList>
    </citation>
    <scope>X-RAY CRYSTALLOGRAPHY (1.70 ANGSTROMS) OF 129-209 IN COMPLEX WITH RARA AND DNA</scope>
</reference>
<reference key="44">
    <citation type="journal article" date="2000" name="EMBO J.">
        <title>Crystal structure of the human RXRalpha ligand-binding domain bound to its natural ligand: 9-cis retinoic acid.</title>
        <authorList>
            <person name="Egea P.F."/>
            <person name="Mitschler A."/>
            <person name="Rochel N."/>
            <person name="Ruff M."/>
            <person name="Chambon P."/>
            <person name="Moras D."/>
        </authorList>
    </citation>
    <scope>X-RAY CRYSTALLOGRAPHY (2.25 ANGSTROMS) OF 224-462 OF APO AND HOLO FORMS</scope>
</reference>
<reference key="45">
    <citation type="journal article" date="2000" name="Genes Dev.">
        <title>Structural basis for autorepression of retinoid X receptor by tetramer formation and the AF-2 helix.</title>
        <authorList>
            <person name="Gampe R.T. Jr."/>
            <person name="Montana V.G."/>
            <person name="Lambert M.H."/>
            <person name="Wisely G.B."/>
            <person name="Milburn M.V."/>
            <person name="Xu H.E."/>
        </authorList>
    </citation>
    <scope>X-RAY CRYSTALLOGRAPHY (2.5 ANGSTROMS) OF 225-462 OF APO AND HOLO FORMS</scope>
</reference>
<reference evidence="45" key="46">
    <citation type="journal article" date="2000" name="J. Mol. Biol.">
        <title>Structural basis of RXR-DNA interactions.</title>
        <authorList>
            <person name="Zhao Q."/>
            <person name="Chasse S.A."/>
            <person name="Devarakonda S."/>
            <person name="Sierk M.L."/>
            <person name="Ahvazi B."/>
            <person name="Rastinejad F."/>
        </authorList>
    </citation>
    <scope>X-RAY CRYSTALLOGRAPHY (2.10 ANGSTROMS) OF 129-209 IN COMPLEX WITH ZINC AND DNA</scope>
    <scope>SUBUNIT</scope>
</reference>
<reference key="47">
    <citation type="journal article" date="2000" name="Mol. Cell">
        <title>Asymmetry in the PPARgamma/RXRalpha crystal structure reveals the molecular basis of heterodimerization among nuclear receptors.</title>
        <authorList>
            <person name="Gampe R.T. Jr."/>
            <person name="Montana V.G."/>
            <person name="Lambert M.H."/>
            <person name="Miller A.B."/>
            <person name="Bledsoe R.K."/>
            <person name="Milburn M.V."/>
            <person name="Kliewer S.A."/>
            <person name="Willson T.M."/>
            <person name="Xu H.E."/>
        </authorList>
    </citation>
    <scope>X-RAY CRYSTALLOGRAPHY (2.1 ANGSTROMS) OF 225-462 IN COMPLEX WITH PPARG; COACTIVATOR NCOA1; RETINOIC ACID AND SYNTHETIC ANTIDIABETIC AGONISTS ROSIGLITAZONE AND GI262570</scope>
</reference>
<reference evidence="46" key="48">
    <citation type="journal article" date="2001" name="Proc. Natl. Acad. Sci. U.S.A.">
        <title>Structural determinants of ligand binding selectivity between the peroxisome proliferator-activated receptors.</title>
        <authorList>
            <person name="Xu H.E."/>
            <person name="Lambert M.H."/>
            <person name="Montana V.G."/>
            <person name="Plunket K.D."/>
            <person name="Moore L.B."/>
            <person name="Collins J.L."/>
            <person name="Oplinger J.A."/>
            <person name="Kliewer S.A."/>
            <person name="Gampe R.T. Jr."/>
            <person name="McKee D.D."/>
            <person name="Moore J.T."/>
            <person name="Willson T.M."/>
        </authorList>
    </citation>
    <scope>X-RAY CRYSTALLOGRAPHY (2.3 ANGSTROMS) OF 225-462 IN COMPLEX WITH PPARA OR PPARG; 9-CIS RETINOIC ACID; COACTIVATOR NCOA1 AND PPAR SYNTHETIC AGONIST GW409544</scope>
</reference>
<reference key="49">
    <citation type="journal article" date="2004" name="Mol. Cell">
        <title>The nuclear xenobiotic receptor CAR: structural determinants of constitutive activation and heterodimerization.</title>
        <authorList>
            <person name="Suino K."/>
            <person name="Peng L."/>
            <person name="Reynolds R."/>
            <person name="Li Y."/>
            <person name="Cha J.Y."/>
            <person name="Repa J.J."/>
            <person name="Kliewer S.A."/>
            <person name="Xu H.E."/>
        </authorList>
    </citation>
    <scope>X-RAY CRYSTALLOGRAPHY (2.96 ANGSTROMS) OF 227-458 IN COMPLEX WITH M.MUSCULUS NR1I13; R.NORVEGICUS NCOA2 AND AGONIST INSECTICIDE CONTAMINANT TCPOBOP</scope>
</reference>
<reference evidence="47" key="50">
    <citation type="journal article" date="2005" name="J. Med. Chem.">
        <title>Discovery of substituted maleimides as liver X receptor agonists and determination of a ligand-bound crystal structure.</title>
        <authorList>
            <person name="Jaye M.C."/>
            <person name="Krawiec J.A."/>
            <person name="Campobasso N."/>
            <person name="Smallwood A."/>
            <person name="Qiu C."/>
            <person name="Lu Q."/>
            <person name="Kerrigan J.J."/>
            <person name="De Los Frailes Alvaro M."/>
            <person name="Laffitte B."/>
            <person name="Liu W.S."/>
            <person name="Marino J.P. Jr."/>
            <person name="Meyer C.R."/>
            <person name="Nichols J.A."/>
            <person name="Parks D.J."/>
            <person name="Perez P."/>
            <person name="Sarov-Blat L."/>
            <person name="Seepersaud S.D."/>
            <person name="Steplewski K.M."/>
            <person name="Thompson S.K."/>
            <person name="Wang P."/>
            <person name="Watson M.A."/>
            <person name="Webb C.L."/>
            <person name="Haigh D."/>
            <person name="Caravella J.A."/>
            <person name="Macphee C.H."/>
            <person name="Willson T.M."/>
            <person name="Collins J.L."/>
        </authorList>
    </citation>
    <scope>X-RAY CRYSTALLOGRAPHY (2.80 ANGSTROMS) OF 225-462 IN COMPLEX WITH ALL-TRANS RETINOATE</scope>
    <scope>FUNCTION</scope>
</reference>
<reference evidence="48" key="51">
    <citation type="journal article" date="2008" name="J. Med. Chem.">
        <title>Structure-guided design of N-phenyl tertiary amines as transrepression-selective liver X receptor modulators with anti-inflammatory activity.</title>
        <authorList>
            <person name="Chao E.Y."/>
            <person name="Caravella J.A."/>
            <person name="Watson M.A."/>
            <person name="Campobasso N."/>
            <person name="Ghisletti S."/>
            <person name="Billin A.N."/>
            <person name="Galardi C."/>
            <person name="Wang P."/>
            <person name="Laffitte B.A."/>
            <person name="Iannone M.A."/>
            <person name="Goodwin B.J."/>
            <person name="Nichols J.A."/>
            <person name="Parks D.J."/>
            <person name="Stewart E."/>
            <person name="Wiethe R.W."/>
            <person name="Williams S.P."/>
            <person name="Smallwood A."/>
            <person name="Pearce K.H."/>
            <person name="Glass C.K."/>
            <person name="Willson T.M."/>
            <person name="Zuercher W.J."/>
            <person name="Collins J.L."/>
        </authorList>
    </citation>
    <scope>X-RAY CRYSTALLOGRAPHY (2.36 ANGSTROMS) OF 225-462 IN COMPLEX WITH ALL-TRANS RETINOATE</scope>
    <scope>FUNCTION</scope>
</reference>
<reference evidence="49" key="52">
    <citation type="journal article" date="2009" name="Bioorg. Med. Chem. Lett.">
        <title>Synthesis and SAR of potent LXR agonists containing an indole pharmacophore.</title>
        <authorList>
            <person name="Washburn D.G."/>
            <person name="Hoang T.H."/>
            <person name="Campobasso N."/>
            <person name="Smallwood A."/>
            <person name="Parks D.J."/>
            <person name="Webb C.L."/>
            <person name="Frank K.A."/>
            <person name="Nord M."/>
            <person name="Duraiswami C."/>
            <person name="Evans C."/>
            <person name="Jaye M."/>
            <person name="Thompson S.K."/>
        </authorList>
    </citation>
    <scope>X-RAY CRYSTALLOGRAPHY (2.06 ANGSTROMS) OF 225-462 IN COMPLEX WITH ALL-TRANS RETINOATE</scope>
    <scope>FUNCTION</scope>
</reference>
<reference evidence="50" key="53">
    <citation type="journal article" date="2017" name="Nat. Commun.">
        <title>The quaternary architecture of RARbeta-RXRalpha heterodimer facilitates domain-domain signal transmission.</title>
        <authorList>
            <person name="Chandra V."/>
            <person name="Wu D."/>
            <person name="Li S."/>
            <person name="Potluri N."/>
            <person name="Kim Y."/>
            <person name="Rastinejad F."/>
        </authorList>
    </citation>
    <scope>X-RAY CRYSTALLOGRAPHY (3.51 ANGSTROMS) OF 98-462 IN COMPLEX WITH RARB AND DNA</scope>
    <scope>FUNCTION</scope>
</reference>
<reference evidence="51" key="54">
    <citation type="journal article" date="2018" name="J. Biol. Chem.">
        <title>Ligand binding and heterodimerization with retinoid X receptor alpha (RXRalpha) induce farnesoid X receptor (FXR) conformational changes affecting coactivator binding.</title>
        <authorList>
            <person name="Wang N."/>
            <person name="Zou Q."/>
            <person name="Xu J."/>
            <person name="Zhang J."/>
            <person name="Liu J."/>
        </authorList>
    </citation>
    <scope>X-RAY CRYSTALLOGRAPHY (2.10 ANGSTROMS) OF 225-462 IN COMPLEX WITH NR1H4; NCOA1 PEPTIDE AND 9-CIS RETINOATE</scope>
    <scope>MUTAGENESIS OF GLU-434</scope>
</reference>
<protein>
    <recommendedName>
        <fullName>Retinoic acid receptor RXR-alpha</fullName>
    </recommendedName>
    <alternativeName>
        <fullName>Nuclear receptor subfamily 2 group B member 1</fullName>
    </alternativeName>
    <alternativeName>
        <fullName>Retinoid X receptor alpha</fullName>
    </alternativeName>
</protein>